<feature type="chain" id="PRO_0000195057" description="Hsp90 co-chaperone Cdc37">
    <location>
        <begin position="1"/>
        <end position="378"/>
    </location>
</feature>
<feature type="initiator methionine" description="Removed; alternate" evidence="16 18 19">
    <location>
        <position position="1"/>
    </location>
</feature>
<feature type="chain" id="PRO_0000423197" description="Hsp90 co-chaperone Cdc37, N-terminally processed">
    <location>
        <begin position="2"/>
        <end position="378"/>
    </location>
</feature>
<feature type="region of interest" description="Disordered" evidence="2">
    <location>
        <begin position="123"/>
        <end position="145"/>
    </location>
</feature>
<feature type="region of interest" description="Disordered" evidence="2">
    <location>
        <begin position="347"/>
        <end position="378"/>
    </location>
</feature>
<feature type="modified residue" description="N-acetylmethionine" evidence="16">
    <location>
        <position position="1"/>
    </location>
</feature>
<feature type="modified residue" description="N-acetylvaline; in Hsp90 co-chaperone Cdc37, N-terminally processed" evidence="16 18 19">
    <location>
        <position position="2"/>
    </location>
</feature>
<feature type="modified residue" description="Phosphoserine" evidence="18 19">
    <location>
        <position position="13"/>
    </location>
</feature>
<feature type="modified residue" description="N6-acetyllysine" evidence="17">
    <location>
        <position position="78"/>
    </location>
</feature>
<feature type="modified residue" description="Phosphothreonine" evidence="20">
    <location>
        <position position="118"/>
    </location>
</feature>
<feature type="modified residue" description="Phosphoserine" evidence="20">
    <location>
        <position position="120"/>
    </location>
</feature>
<feature type="modified residue" description="N6-acetyllysine" evidence="17">
    <location>
        <position position="154"/>
    </location>
</feature>
<feature type="modified residue" description="Phosphoserine" evidence="15">
    <location>
        <position position="377"/>
    </location>
</feature>
<feature type="sequence variant" id="VAR_022220" description="In dbSNP:rs280528." evidence="13">
    <original>G</original>
    <variation>E</variation>
    <location>
        <position position="360"/>
    </location>
</feature>
<feature type="strand" evidence="25">
    <location>
        <begin position="6"/>
        <end position="8"/>
    </location>
</feature>
<feature type="turn" evidence="23">
    <location>
        <begin position="13"/>
        <end position="15"/>
    </location>
</feature>
<feature type="helix" evidence="26">
    <location>
        <begin position="16"/>
        <end position="18"/>
    </location>
</feature>
<feature type="helix" evidence="25">
    <location>
        <begin position="25"/>
        <end position="73"/>
    </location>
</feature>
<feature type="helix" evidence="25">
    <location>
        <begin position="78"/>
        <end position="111"/>
    </location>
</feature>
<feature type="helix" evidence="25">
    <location>
        <begin position="116"/>
        <end position="119"/>
    </location>
</feature>
<feature type="strand" evidence="25">
    <location>
        <begin position="120"/>
        <end position="122"/>
    </location>
</feature>
<feature type="strand" evidence="25">
    <location>
        <begin position="126"/>
        <end position="129"/>
    </location>
</feature>
<feature type="helix" evidence="24">
    <location>
        <begin position="149"/>
        <end position="163"/>
    </location>
</feature>
<feature type="helix" evidence="24">
    <location>
        <begin position="168"/>
        <end position="177"/>
    </location>
</feature>
<feature type="helix" evidence="24">
    <location>
        <begin position="179"/>
        <end position="181"/>
    </location>
</feature>
<feature type="helix" evidence="24">
    <location>
        <begin position="184"/>
        <end position="199"/>
    </location>
</feature>
<feature type="helix" evidence="24">
    <location>
        <begin position="203"/>
        <end position="226"/>
    </location>
</feature>
<feature type="helix" evidence="24">
    <location>
        <begin position="230"/>
        <end position="241"/>
    </location>
</feature>
<feature type="helix" evidence="24">
    <location>
        <begin position="247"/>
        <end position="272"/>
    </location>
</feature>
<feature type="helix" evidence="21">
    <location>
        <begin position="294"/>
        <end position="300"/>
    </location>
</feature>
<feature type="helix" evidence="22">
    <location>
        <begin position="303"/>
        <end position="310"/>
    </location>
</feature>
<feature type="helix" evidence="21">
    <location>
        <begin position="317"/>
        <end position="321"/>
    </location>
</feature>
<feature type="strand" evidence="21">
    <location>
        <begin position="325"/>
        <end position="327"/>
    </location>
</feature>
<feature type="helix" evidence="21">
    <location>
        <begin position="328"/>
        <end position="338"/>
    </location>
</feature>
<feature type="strand" evidence="22">
    <location>
        <begin position="345"/>
        <end position="347"/>
    </location>
</feature>
<feature type="strand" evidence="22">
    <location>
        <begin position="365"/>
        <end position="367"/>
    </location>
</feature>
<comment type="function">
    <text evidence="7 10">Co-chaperone that binds to numerous kinases and promotes their interaction with the Hsp90 complex, resulting in stabilization and promotion of their activity (PubMed:8666233). Inhibits HSP90AA1 ATPase activity (PubMed:23569206).</text>
</comment>
<comment type="subunit">
    <text evidence="1 3 4 5 7 8 9 11 12">Probably forms a complex composed of chaperones HSP90 and HSP70, co-chaperones STIP1/HOP, CDC37, PPP5C, PTGES3/p23, TSC1 and client protein TSC2 (PubMed:29127155). Probably forms a complex composed of chaperones HSP90 and HSP70, co-chaperones CDC37, PPP5C, TSC1 and client protein TSC2, CDK4, AKT, RAF1 and NR3C1; this complex does not contain co-chaperones STIP1/HOP and PTGES3/p23 (PubMed:29127155). Forms a complex with Hsp90/HSP90AB1 and CDK6 (PubMed:9482106). Interacts with HSP90AA1 (PubMed:23569206, PubMed:27353360). Interacts with AR, CDK4, CDK6 and EIF2AK1 (PubMed:11036079, PubMed:11085988, PubMed:9150368, PubMed:9482106). Interacts with RB1 (By similarity). Interacts with KSR1 (PubMed:10409742). Interacts with FLCN, FNIP1 and FNIP2 (PubMed:27353360).</text>
</comment>
<comment type="interaction">
    <interactant intactId="EBI-295634">
        <id>Q16543</id>
    </interactant>
    <interactant intactId="EBI-353944">
        <id>P60709</id>
        <label>ACTB</label>
    </interactant>
    <organismsDiffer>false</organismsDiffer>
    <experiments>3</experiments>
</comment>
<comment type="interaction">
    <interactant intactId="EBI-295634">
        <id>Q16543</id>
    </interactant>
    <interactant intactId="EBI-351292">
        <id>P63261</id>
        <label>ACTG1</label>
    </interactant>
    <organismsDiffer>false</organismsDiffer>
    <experiments>3</experiments>
</comment>
<comment type="interaction">
    <interactant intactId="EBI-295634">
        <id>Q16543</id>
    </interactant>
    <interactant intactId="EBI-296087">
        <id>P31749</id>
        <label>AKT1</label>
    </interactant>
    <organismsDiffer>false</organismsDiffer>
    <experiments>5</experiments>
</comment>
<comment type="interaction">
    <interactant intactId="EBI-295634">
        <id>Q16543</id>
    </interactant>
    <interactant intactId="EBI-296115">
        <id>Q9Y243</id>
        <label>AKT3</label>
    </interactant>
    <organismsDiffer>false</organismsDiffer>
    <experiments>5</experiments>
</comment>
<comment type="interaction">
    <interactant intactId="EBI-295634">
        <id>Q16543</id>
    </interactant>
    <interactant intactId="EBI-6423788">
        <id>Q16671</id>
        <label>AMHR2</label>
    </interactant>
    <organismsDiffer>false</organismsDiffer>
    <experiments>2</experiments>
</comment>
<comment type="interaction">
    <interactant intactId="EBI-295634">
        <id>Q16543</id>
    </interactant>
    <interactant intactId="EBI-746752">
        <id>Q9Y2J4</id>
        <label>AMOTL2</label>
    </interactant>
    <organismsDiffer>false</organismsDiffer>
    <experiments>3</experiments>
</comment>
<comment type="interaction">
    <interactant intactId="EBI-295634">
        <id>Q16543</id>
    </interactant>
    <interactant intactId="EBI-1222467">
        <id>P02649</id>
        <label>APOE</label>
    </interactant>
    <organismsDiffer>false</organismsDiffer>
    <experiments>3</experiments>
</comment>
<comment type="interaction">
    <interactant intactId="EBI-295634">
        <id>Q16543</id>
    </interactant>
    <interactant intactId="EBI-624291">
        <id>Q96GD4</id>
        <label>AURKB</label>
    </interactant>
    <organismsDiffer>false</organismsDiffer>
    <experiments>7</experiments>
</comment>
<comment type="interaction">
    <interactant intactId="EBI-295634">
        <id>Q16543</id>
    </interactant>
    <interactant intactId="EBI-10181188">
        <id>Q8N7W2-2</id>
        <label>BEND7</label>
    </interactant>
    <organismsDiffer>false</organismsDiffer>
    <experiments>3</experiments>
</comment>
<comment type="interaction">
    <interactant intactId="EBI-295634">
        <id>Q16543</id>
    </interactant>
    <interactant intactId="EBI-2548012">
        <id>Q9H2G9</id>
        <label>BLZF1</label>
    </interactant>
    <organismsDiffer>false</organismsDiffer>
    <experiments>3</experiments>
</comment>
<comment type="interaction">
    <interactant intactId="EBI-295634">
        <id>Q16543</id>
    </interactant>
    <interactant intactId="EBI-311155">
        <id>Q9Y2F9</id>
        <label>BTBD3</label>
    </interactant>
    <organismsDiffer>false</organismsDiffer>
    <experiments>3</experiments>
</comment>
<comment type="interaction">
    <interactant intactId="EBI-295634">
        <id>Q16543</id>
    </interactant>
    <interactant intactId="EBI-1383687">
        <id>Q9UQM7</id>
        <label>CAMK2A</label>
    </interactant>
    <organismsDiffer>false</organismsDiffer>
    <experiments>5</experiments>
</comment>
<comment type="interaction">
    <interactant intactId="EBI-295634">
        <id>Q16543</id>
    </interactant>
    <interactant intactId="EBI-11523526">
        <id>Q13554-3</id>
        <label>CAMK2B</label>
    </interactant>
    <organismsDiffer>false</organismsDiffer>
    <experiments>3</experiments>
</comment>
<comment type="interaction">
    <interactant intactId="EBI-295634">
        <id>Q16543</id>
    </interactant>
    <interactant intactId="EBI-12020154">
        <id>Q13555-5</id>
        <label>CAMK2G</label>
    </interactant>
    <organismsDiffer>false</organismsDiffer>
    <experiments>3</experiments>
</comment>
<comment type="interaction">
    <interactant intactId="EBI-295634">
        <id>Q16543</id>
    </interactant>
    <interactant intactId="EBI-3866279">
        <id>Q9BWT7</id>
        <label>CARD10</label>
    </interactant>
    <organismsDiffer>false</organismsDiffer>
    <experiments>3</experiments>
</comment>
<comment type="interaction">
    <interactant intactId="EBI-295634">
        <id>Q16543</id>
    </interactant>
    <interactant intactId="EBI-11530605">
        <id>Q9H257-2</id>
        <label>CARD9</label>
    </interactant>
    <organismsDiffer>false</organismsDiffer>
    <experiments>3</experiments>
</comment>
<comment type="interaction">
    <interactant intactId="EBI-295634">
        <id>Q16543</id>
    </interactant>
    <interactant intactId="EBI-2559016">
        <id>Q6NZI2</id>
        <label>CAVIN1</label>
    </interactant>
    <organismsDiffer>false</organismsDiffer>
    <experiments>3</experiments>
</comment>
<comment type="interaction">
    <interactant intactId="EBI-295634">
        <id>Q16543</id>
    </interactant>
    <interactant intactId="EBI-11524851">
        <id>Q8NA61-2</id>
        <label>CBY2</label>
    </interactant>
    <organismsDiffer>false</organismsDiffer>
    <experiments>3</experiments>
</comment>
<comment type="interaction">
    <interactant intactId="EBI-295634">
        <id>Q16543</id>
    </interactant>
    <interactant intactId="EBI-10972887">
        <id>Q96M89-2</id>
        <label>CCDC138</label>
    </interactant>
    <organismsDiffer>false</organismsDiffer>
    <experiments>3</experiments>
</comment>
<comment type="interaction">
    <interactant intactId="EBI-295634">
        <id>Q16543</id>
    </interactant>
    <interactant intactId="EBI-18398007">
        <id>Q4G0S7</id>
        <label>CCDC152</label>
    </interactant>
    <organismsDiffer>false</organismsDiffer>
    <experiments>3</experiments>
</comment>
<comment type="interaction">
    <interactant intactId="EBI-295634">
        <id>Q16543</id>
    </interactant>
    <interactant intactId="EBI-12012082">
        <id>Q7Z6B0-2</id>
        <label>CCDC91</label>
    </interactant>
    <organismsDiffer>false</organismsDiffer>
    <experiments>3</experiments>
</comment>
<comment type="interaction">
    <interactant intactId="EBI-295634">
        <id>Q16543</id>
    </interactant>
    <interactant intactId="EBI-10175300">
        <id>Q8TD31-3</id>
        <label>CCHCR1</label>
    </interactant>
    <organismsDiffer>false</organismsDiffer>
    <experiments>3</experiments>
</comment>
<comment type="interaction">
    <interactant intactId="EBI-295634">
        <id>Q16543</id>
    </interactant>
    <interactant intactId="EBI-968626">
        <id>Q14004</id>
        <label>CDK13</label>
    </interactant>
    <organismsDiffer>false</organismsDiffer>
    <experiments>2</experiments>
</comment>
<comment type="interaction">
    <interactant intactId="EBI-295634">
        <id>Q16543</id>
    </interactant>
    <interactant intactId="EBI-1051975">
        <id>Q96Q40</id>
        <label>CDK15</label>
    </interactant>
    <organismsDiffer>false</organismsDiffer>
    <experiments>2</experiments>
</comment>
<comment type="interaction">
    <interactant intactId="EBI-295634">
        <id>Q16543</id>
    </interactant>
    <interactant intactId="EBI-295644">
        <id>P11802</id>
        <label>CDK4</label>
    </interactant>
    <organismsDiffer>false</organismsDiffer>
    <experiments>16</experiments>
</comment>
<comment type="interaction">
    <interactant intactId="EBI-295634">
        <id>Q16543</id>
    </interactant>
    <interactant intactId="EBI-295663">
        <id>Q00534</id>
        <label>CDK6</label>
    </interactant>
    <organismsDiffer>false</organismsDiffer>
    <experiments>4</experiments>
</comment>
<comment type="interaction">
    <interactant intactId="EBI-295634">
        <id>Q16543</id>
    </interactant>
    <interactant intactId="EBI-1383449">
        <id>P50750</id>
        <label>CDK9</label>
    </interactant>
    <organismsDiffer>false</organismsDiffer>
    <experiments>9</experiments>
</comment>
<comment type="interaction">
    <interactant intactId="EBI-295634">
        <id>Q16543</id>
    </interactant>
    <interactant intactId="EBI-747776">
        <id>Q53EZ4</id>
        <label>CEP55</label>
    </interactant>
    <organismsDiffer>false</organismsDiffer>
    <experiments>3</experiments>
</comment>
<comment type="interaction">
    <interactant intactId="EBI-295634">
        <id>Q16543</id>
    </interactant>
    <interactant intactId="EBI-739624">
        <id>Q8NHQ1</id>
        <label>CEP70</label>
    </interactant>
    <organismsDiffer>false</organismsDiffer>
    <experiments>3</experiments>
</comment>
<comment type="interaction">
    <interactant intactId="EBI-295634">
        <id>Q16543</id>
    </interactant>
    <interactant intactId="EBI-723153">
        <id>Q9UFW8</id>
        <label>CGGBP1</label>
    </interactant>
    <organismsDiffer>false</organismsDiffer>
    <experiments>3</experiments>
</comment>
<comment type="interaction">
    <interactant intactId="EBI-295634">
        <id>Q16543</id>
    </interactant>
    <interactant intactId="EBI-81249">
        <id>O15111</id>
        <label>CHUK</label>
    </interactant>
    <organismsDiffer>false</organismsDiffer>
    <experiments>9</experiments>
</comment>
<comment type="interaction">
    <interactant intactId="EBI-295634">
        <id>Q16543</id>
    </interactant>
    <interactant intactId="EBI-12051833">
        <id>Q5HYN5</id>
        <label>CT45A1</label>
    </interactant>
    <organismsDiffer>false</organismsDiffer>
    <experiments>3</experiments>
</comment>
<comment type="interaction">
    <interactant intactId="EBI-295634">
        <id>Q16543</id>
    </interactant>
    <interactant intactId="EBI-1188472">
        <id>P78358</id>
        <label>CTAG1B</label>
    </interactant>
    <organismsDiffer>false</organismsDiffer>
    <experiments>3</experiments>
</comment>
<comment type="interaction">
    <interactant intactId="EBI-295634">
        <id>Q16543</id>
    </interactant>
    <interactant intactId="EBI-456067">
        <id>Q13620</id>
        <label>CUL4B</label>
    </interactant>
    <organismsDiffer>false</organismsDiffer>
    <experiments>2</experiments>
</comment>
<comment type="interaction">
    <interactant intactId="EBI-295634">
        <id>Q16543</id>
    </interactant>
    <interactant intactId="EBI-714918">
        <id>Q9NTM9</id>
        <label>CUTC</label>
    </interactant>
    <organismsDiffer>false</organismsDiffer>
    <experiments>3</experiments>
</comment>
<comment type="interaction">
    <interactant intactId="EBI-295634">
        <id>Q16543</id>
    </interactant>
    <interactant intactId="EBI-1381484">
        <id>Q16832</id>
        <label>DDR2</label>
    </interactant>
    <organismsDiffer>false</organismsDiffer>
    <experiments>3</experiments>
</comment>
<comment type="interaction">
    <interactant intactId="EBI-295634">
        <id>Q16543</id>
    </interactant>
    <interactant intactId="EBI-11988027">
        <id>Q9NRI5-2</id>
        <label>DISC1</label>
    </interactant>
    <organismsDiffer>false</organismsDiffer>
    <experiments>3</experiments>
</comment>
<comment type="interaction">
    <interactant intactId="EBI-295634">
        <id>Q16543</id>
    </interactant>
    <interactant intactId="EBI-357034">
        <id>P25685</id>
        <label>DNAJB1</label>
    </interactant>
    <organismsDiffer>false</organismsDiffer>
    <experiments>3</experiments>
</comment>
<comment type="interaction">
    <interactant intactId="EBI-295634">
        <id>Q16543</id>
    </interactant>
    <interactant intactId="EBI-297353">
        <id>P00533</id>
        <label>EGFR</label>
    </interactant>
    <organismsDiffer>false</organismsDiffer>
    <experiments>13</experiments>
</comment>
<comment type="interaction">
    <interactant intactId="EBI-295634">
        <id>Q16543</id>
    </interactant>
    <interactant intactId="EBI-641062">
        <id>P04626</id>
        <label>ERBB2</label>
    </interactant>
    <organismsDiffer>false</organismsDiffer>
    <experiments>5</experiments>
</comment>
<comment type="interaction">
    <interactant intactId="EBI-295634">
        <id>Q16543</id>
    </interactant>
    <interactant intactId="EBI-8638992">
        <id>Q9NWS6</id>
        <label>FAM118A</label>
    </interactant>
    <organismsDiffer>false</organismsDiffer>
    <experiments>3</experiments>
</comment>
<comment type="interaction">
    <interactant intactId="EBI-295634">
        <id>Q16543</id>
    </interactant>
    <interactant intactId="EBI-10175124">
        <id>Q8IZU0</id>
        <label>FAM9B</label>
    </interactant>
    <organismsDiffer>false</organismsDiffer>
    <experiments>3</experiments>
</comment>
<comment type="interaction">
    <interactant intactId="EBI-295634">
        <id>Q16543</id>
    </interactant>
    <interactant intactId="EBI-743099">
        <id>Q969F0</id>
        <label>FATE1</label>
    </interactant>
    <organismsDiffer>false</organismsDiffer>
    <experiments>3</experiments>
</comment>
<comment type="interaction">
    <interactant intactId="EBI-295634">
        <id>Q16543</id>
    </interactant>
    <interactant intactId="EBI-914727">
        <id>Q9UKT8</id>
        <label>FBXW2</label>
    </interactant>
    <organismsDiffer>false</organismsDiffer>
    <experiments>2</experiments>
</comment>
<comment type="interaction">
    <interactant intactId="EBI-295634">
        <id>Q16543</id>
    </interactant>
    <interactant intactId="EBI-1380661">
        <id>P16591</id>
        <label>FER</label>
    </interactant>
    <organismsDiffer>false</organismsDiffer>
    <experiments>6</experiments>
</comment>
<comment type="interaction">
    <interactant intactId="EBI-295634">
        <id>Q16543</id>
    </interactant>
    <interactant intactId="EBI-348399">
        <id>P22607</id>
        <label>FGFR3</label>
    </interactant>
    <organismsDiffer>false</organismsDiffer>
    <experiments>4</experiments>
</comment>
<comment type="interaction">
    <interactant intactId="EBI-295634">
        <id>Q16543</id>
    </interactant>
    <interactant intactId="EBI-1047444">
        <id>Q02790</id>
        <label>FKBP4</label>
    </interactant>
    <organismsDiffer>false</organismsDiffer>
    <experiments>3</experiments>
</comment>
<comment type="interaction">
    <interactant intactId="EBI-295634">
        <id>Q16543</id>
    </interactant>
    <interactant intactId="EBI-515315">
        <id>P06241</id>
        <label>FYN</label>
    </interactant>
    <organismsDiffer>false</organismsDiffer>
    <experiments>6</experiments>
</comment>
<comment type="interaction">
    <interactant intactId="EBI-295634">
        <id>Q16543</id>
    </interactant>
    <interactant intactId="EBI-11745923">
        <id>O60861-1</id>
        <label>GAS7</label>
    </interactant>
    <organismsDiffer>false</organismsDiffer>
    <experiments>3</experiments>
</comment>
<comment type="interaction">
    <interactant intactId="EBI-295634">
        <id>Q16543</id>
    </interactant>
    <interactant intactId="EBI-1052570">
        <id>O95995</id>
        <label>GAS8</label>
    </interactant>
    <organismsDiffer>false</organismsDiffer>
    <experiments>3</experiments>
</comment>
<comment type="interaction">
    <interactant intactId="EBI-295634">
        <id>Q16543</id>
    </interactant>
    <interactant intactId="EBI-744302">
        <id>P14136</id>
        <label>GFAP</label>
    </interactant>
    <organismsDiffer>false</organismsDiffer>
    <experiments>3</experiments>
</comment>
<comment type="interaction">
    <interactant intactId="EBI-295634">
        <id>Q16543</id>
    </interactant>
    <interactant intactId="EBI-2548508">
        <id>Q96IK5</id>
        <label>GMCL1</label>
    </interactant>
    <organismsDiffer>false</organismsDiffer>
    <experiments>3</experiments>
</comment>
<comment type="interaction">
    <interactant intactId="EBI-295634">
        <id>Q16543</id>
    </interactant>
    <interactant intactId="EBI-618309">
        <id>Q08379</id>
        <label>GOLGA2</label>
    </interactant>
    <organismsDiffer>false</organismsDiffer>
    <experiments>3</experiments>
</comment>
<comment type="interaction">
    <interactant intactId="EBI-295634">
        <id>Q16543</id>
    </interactant>
    <interactant intactId="EBI-5916454">
        <id>A6NEM1</id>
        <label>GOLGA6L9</label>
    </interactant>
    <organismsDiffer>false</organismsDiffer>
    <experiments>3</experiments>
</comment>
<comment type="interaction">
    <interactant intactId="EBI-295634">
        <id>Q16543</id>
    </interactant>
    <interactant intactId="EBI-11519926">
        <id>Q6PI77</id>
        <label>GPRASP3</label>
    </interactant>
    <organismsDiffer>false</organismsDiffer>
    <experiments>3</experiments>
</comment>
<comment type="interaction">
    <interactant intactId="EBI-295634">
        <id>Q16543</id>
    </interactant>
    <interactant intactId="EBI-2832937">
        <id>Q96HH9</id>
        <label>GRAMD2B</label>
    </interactant>
    <organismsDiffer>false</organismsDiffer>
    <experiments>3</experiments>
</comment>
<comment type="interaction">
    <interactant intactId="EBI-295634">
        <id>Q16543</id>
    </interactant>
    <interactant intactId="EBI-717919">
        <id>Q4V328</id>
        <label>GRIPAP1</label>
    </interactant>
    <organismsDiffer>false</organismsDiffer>
    <experiments>3</experiments>
</comment>
<comment type="interaction">
    <interactant intactId="EBI-295634">
        <id>Q16543</id>
    </interactant>
    <interactant intactId="EBI-748420">
        <id>Q9NSC5</id>
        <label>HOMER3</label>
    </interactant>
    <organismsDiffer>false</organismsDiffer>
    <experiments>3</experiments>
</comment>
<comment type="interaction">
    <interactant intactId="EBI-295634">
        <id>Q16543</id>
    </interactant>
    <interactant intactId="EBI-7116203">
        <id>O75031</id>
        <label>HSF2BP</label>
    </interactant>
    <organismsDiffer>false</organismsDiffer>
    <experiments>3</experiments>
</comment>
<comment type="interaction">
    <interactant intactId="EBI-295634">
        <id>Q16543</id>
    </interactant>
    <interactant intactId="EBI-296047">
        <id>P07900</id>
        <label>HSP90AA1</label>
    </interactant>
    <organismsDiffer>false</organismsDiffer>
    <experiments>17</experiments>
</comment>
<comment type="interaction">
    <interactant intactId="EBI-295634">
        <id>Q16543</id>
    </interactant>
    <interactant intactId="EBI-352572">
        <id>P08238</id>
        <label>HSP90AB1</label>
    </interactant>
    <organismsDiffer>false</organismsDiffer>
    <experiments>14</experiments>
</comment>
<comment type="interaction">
    <interactant intactId="EBI-295634">
        <id>Q16543</id>
    </interactant>
    <interactant intactId="EBI-745127">
        <id>O14879</id>
        <label>IFIT3</label>
    </interactant>
    <organismsDiffer>false</organismsDiffer>
    <experiments>4</experiments>
</comment>
<comment type="interaction">
    <interactant intactId="EBI-295634">
        <id>Q16543</id>
    </interactant>
    <interactant intactId="EBI-81266">
        <id>O14920</id>
        <label>IKBKB</label>
    </interactant>
    <organismsDiffer>false</organismsDiffer>
    <experiments>8</experiments>
</comment>
<comment type="interaction">
    <interactant intactId="EBI-295634">
        <id>Q16543</id>
    </interactant>
    <interactant intactId="EBI-307369">
        <id>Q14164</id>
        <label>IKBKE</label>
    </interactant>
    <organismsDiffer>false</organismsDiffer>
    <experiments>3</experiments>
</comment>
<comment type="interaction">
    <interactant intactId="EBI-295634">
        <id>Q16543</id>
    </interactant>
    <interactant intactId="EBI-81279">
        <id>Q9Y6K9</id>
        <label>IKBKG</label>
    </interactant>
    <organismsDiffer>false</organismsDiffer>
    <experiments>9</experiments>
</comment>
<comment type="interaction">
    <interactant intactId="EBI-295634">
        <id>Q16543</id>
    </interactant>
    <interactant intactId="EBI-747204">
        <id>Q9UKT9</id>
        <label>IKZF3</label>
    </interactant>
    <organismsDiffer>false</organismsDiffer>
    <experiments>3</experiments>
</comment>
<comment type="interaction">
    <interactant intactId="EBI-295634">
        <id>Q16543</id>
    </interactant>
    <interactant intactId="EBI-17181882">
        <id>O75564-2</id>
        <label>JRK</label>
    </interactant>
    <organismsDiffer>false</organismsDiffer>
    <experiments>3</experiments>
</comment>
<comment type="interaction">
    <interactant intactId="EBI-295634">
        <id>Q16543</id>
    </interactant>
    <interactant intactId="EBI-715394">
        <id>Q9H079</id>
        <label>KATNBL1</label>
    </interactant>
    <organismsDiffer>false</organismsDiffer>
    <experiments>3</experiments>
</comment>
<comment type="interaction">
    <interactant intactId="EBI-295634">
        <id>Q16543</id>
    </interactant>
    <interactant intactId="EBI-742916">
        <id>Q8WZ19</id>
        <label>KCTD13</label>
    </interactant>
    <organismsDiffer>false</organismsDiffer>
    <experiments>3</experiments>
</comment>
<comment type="interaction">
    <interactant intactId="EBI-295634">
        <id>Q16543</id>
    </interactant>
    <interactant intactId="EBI-4397613">
        <id>Q7L273</id>
        <label>KCTD9</label>
    </interactant>
    <organismsDiffer>false</organismsDiffer>
    <experiments>3</experiments>
</comment>
<comment type="interaction">
    <interactant intactId="EBI-295634">
        <id>Q16543</id>
    </interactant>
    <interactant intactId="EBI-14069005">
        <id>Q9BVG8-5</id>
        <label>KIFC3</label>
    </interactant>
    <organismsDiffer>false</organismsDiffer>
    <experiments>3</experiments>
</comment>
<comment type="interaction">
    <interactant intactId="EBI-295634">
        <id>Q16543</id>
    </interactant>
    <interactant intactId="EBI-746999">
        <id>O95198</id>
        <label>KLHL2</label>
    </interactant>
    <organismsDiffer>false</organismsDiffer>
    <experiments>3</experiments>
</comment>
<comment type="interaction">
    <interactant intactId="EBI-295634">
        <id>Q16543</id>
    </interactant>
    <interactant intactId="EBI-2949715">
        <id>O95678</id>
        <label>KRT75</label>
    </interactant>
    <organismsDiffer>false</organismsDiffer>
    <experiments>3</experiments>
</comment>
<comment type="interaction">
    <interactant intactId="EBI-295634">
        <id>Q16543</id>
    </interactant>
    <interactant intactId="EBI-2952745">
        <id>Q01546</id>
        <label>KRT76</label>
    </interactant>
    <organismsDiffer>false</organismsDiffer>
    <experiments>3</experiments>
</comment>
<comment type="interaction">
    <interactant intactId="EBI-295634">
        <id>Q16543</id>
    </interactant>
    <interactant intactId="EBI-6424389">
        <id>Q6VAB6</id>
        <label>KSR2</label>
    </interactant>
    <organismsDiffer>false</organismsDiffer>
    <experiments>7</experiments>
</comment>
<comment type="interaction">
    <interactant intactId="EBI-295634">
        <id>Q16543</id>
    </interactant>
    <interactant intactId="EBI-1384350">
        <id>P53671</id>
        <label>LIMK2</label>
    </interactant>
    <organismsDiffer>false</organismsDiffer>
    <experiments>3</experiments>
</comment>
<comment type="interaction">
    <interactant intactId="EBI-295634">
        <id>Q16543</id>
    </interactant>
    <interactant intactId="EBI-2830427">
        <id>Q03252</id>
        <label>LMNB2</label>
    </interactant>
    <organismsDiffer>false</organismsDiffer>
    <experiments>3</experiments>
</comment>
<comment type="interaction">
    <interactant intactId="EBI-295634">
        <id>Q16543</id>
    </interactant>
    <interactant intactId="EBI-5323863">
        <id>Q5S007</id>
        <label>LRRK2</label>
    </interactant>
    <organismsDiffer>false</organismsDiffer>
    <experiments>9</experiments>
</comment>
<comment type="interaction">
    <interactant intactId="EBI-295634">
        <id>Q16543</id>
    </interactant>
    <interactant intactId="EBI-1216080">
        <id>Q9Y250</id>
        <label>LZTS1</label>
    </interactant>
    <organismsDiffer>false</organismsDiffer>
    <experiments>3</experiments>
</comment>
<comment type="interaction">
    <interactant intactId="EBI-295634">
        <id>Q16543</id>
    </interactant>
    <interactant intactId="EBI-742610">
        <id>Q9Y6D9</id>
        <label>MAD1L1</label>
    </interactant>
    <organismsDiffer>false</organismsDiffer>
    <experiments>3</experiments>
</comment>
<comment type="interaction">
    <interactant intactId="EBI-295634">
        <id>Q16543</id>
    </interactant>
    <interactant intactId="EBI-358011">
        <id>Q99558</id>
        <label>MAP3K14</label>
    </interactant>
    <organismsDiffer>false</organismsDiffer>
    <experiments>6</experiments>
</comment>
<comment type="interaction">
    <interactant intactId="EBI-295634">
        <id>Q16543</id>
    </interactant>
    <interactant intactId="EBI-358684">
        <id>O43318</id>
        <label>MAP3K7</label>
    </interactant>
    <organismsDiffer>false</organismsDiffer>
    <experiments>4</experiments>
</comment>
<comment type="interaction">
    <interactant intactId="EBI-295634">
        <id>Q16543</id>
    </interactant>
    <interactant intactId="EBI-358700">
        <id>O43318-2</id>
        <label>MAP3K7</label>
    </interactant>
    <organismsDiffer>false</organismsDiffer>
    <experiments>5</experiments>
</comment>
<comment type="interaction">
    <interactant intactId="EBI-295634">
        <id>Q16543</id>
    </interactant>
    <interactant intactId="EBI-724076">
        <id>Q99750</id>
        <label>MDFI</label>
    </interactant>
    <organismsDiffer>false</organismsDiffer>
    <experiments>3</experiments>
</comment>
<comment type="interaction">
    <interactant intactId="EBI-295634">
        <id>Q16543</id>
    </interactant>
    <interactant intactId="EBI-2340316">
        <id>O15344</id>
        <label>MID1</label>
    </interactant>
    <organismsDiffer>false</organismsDiffer>
    <experiments>3</experiments>
</comment>
<comment type="interaction">
    <interactant intactId="EBI-295634">
        <id>Q16543</id>
    </interactant>
    <interactant intactId="EBI-2548751">
        <id>Q8TD10</id>
        <label>MIPOL1</label>
    </interactant>
    <organismsDiffer>false</organismsDiffer>
    <experiments>3</experiments>
</comment>
<comment type="interaction">
    <interactant intactId="EBI-295634">
        <id>Q16543</id>
    </interactant>
    <interactant intactId="EBI-1757866">
        <id>P00540</id>
        <label>MOS</label>
    </interactant>
    <organismsDiffer>false</organismsDiffer>
    <experiments>2</experiments>
</comment>
<comment type="interaction">
    <interactant intactId="EBI-295634">
        <id>Q16543</id>
    </interactant>
    <interactant intactId="EBI-726059">
        <id>Q9BYD2</id>
        <label>MRPL9</label>
    </interactant>
    <organismsDiffer>false</organismsDiffer>
    <experiments>3</experiments>
</comment>
<comment type="interaction">
    <interactant intactId="EBI-295634">
        <id>Q16543</id>
    </interactant>
    <interactant intactId="EBI-6423196">
        <id>O15146</id>
        <label>MUSK</label>
    </interactant>
    <organismsDiffer>false</organismsDiffer>
    <experiments>3</experiments>
</comment>
<comment type="interaction">
    <interactant intactId="EBI-295634">
        <id>Q16543</id>
    </interactant>
    <interactant intactId="EBI-11956853">
        <id>Q8N987</id>
        <label>NECAB1</label>
    </interactant>
    <organismsDiffer>false</organismsDiffer>
    <experiments>3</experiments>
</comment>
<comment type="interaction">
    <interactant intactId="EBI-295634">
        <id>Q16543</id>
    </interactant>
    <interactant intactId="EBI-10172876">
        <id>Q7Z6G3-2</id>
        <label>NECAB2</label>
    </interactant>
    <organismsDiffer>false</organismsDiffer>
    <experiments>3</experiments>
</comment>
<comment type="interaction">
    <interactant intactId="EBI-295634">
        <id>Q16543</id>
    </interactant>
    <interactant intactId="EBI-1391623">
        <id>P29474</id>
        <label>NOS3</label>
    </interactant>
    <organismsDiffer>false</organismsDiffer>
    <experiments>4</experiments>
</comment>
<comment type="interaction">
    <interactant intactId="EBI-295634">
        <id>Q16543</id>
    </interactant>
    <interactant intactId="EBI-10311735">
        <id>Q9NQ35</id>
        <label>NRIP3</label>
    </interactant>
    <organismsDiffer>false</organismsDiffer>
    <experiments>3</experiments>
</comment>
<comment type="interaction">
    <interactant intactId="EBI-295634">
        <id>Q16543</id>
    </interactant>
    <interactant intactId="EBI-10441581">
        <id>Q9BXI3</id>
        <label>NT5C1A</label>
    </interactant>
    <organismsDiffer>false</organismsDiffer>
    <experiments>3</experiments>
</comment>
<comment type="interaction">
    <interactant intactId="EBI-295634">
        <id>Q16543</id>
    </interactant>
    <interactant intactId="EBI-712261">
        <id>P22234</id>
        <label>PAICS</label>
    </interactant>
    <organismsDiffer>false</organismsDiffer>
    <experiments>3</experiments>
</comment>
<comment type="interaction">
    <interactant intactId="EBI-295634">
        <id>Q16543</id>
    </interactant>
    <interactant intactId="EBI-11524542">
        <id>O76083-2</id>
        <label>PDE9A</label>
    </interactant>
    <organismsDiffer>false</organismsDiffer>
    <experiments>3</experiments>
</comment>
<comment type="interaction">
    <interactant intactId="EBI-295634">
        <id>Q16543</id>
    </interactant>
    <interactant intactId="EBI-6423298">
        <id>Q8N165</id>
        <label>PDIK1L</label>
    </interactant>
    <organismsDiffer>false</organismsDiffer>
    <experiments>4</experiments>
</comment>
<comment type="interaction">
    <interactant intactId="EBI-295634">
        <id>Q16543</id>
    </interactant>
    <interactant intactId="EBI-14066006">
        <id>Q4G0R1</id>
        <label>PIBF1</label>
    </interactant>
    <organismsDiffer>false</organismsDiffer>
    <experiments>3</experiments>
</comment>
<comment type="interaction">
    <interactant intactId="EBI-295634">
        <id>Q16543</id>
    </interactant>
    <interactant intactId="EBI-302355">
        <id>Q9UL42</id>
        <label>PNMA2</label>
    </interactant>
    <organismsDiffer>false</organismsDiffer>
    <experiments>3</experiments>
</comment>
<comment type="interaction">
    <interactant intactId="EBI-295634">
        <id>Q16543</id>
    </interactant>
    <interactant intactId="EBI-12029004">
        <id>P78424</id>
        <label>POU6F2</label>
    </interactant>
    <organismsDiffer>false</organismsDiffer>
    <experiments>3</experiments>
</comment>
<comment type="interaction">
    <interactant intactId="EBI-295634">
        <id>Q16543</id>
    </interactant>
    <interactant intactId="EBI-716663">
        <id>P53041</id>
        <label>PPP5C</label>
    </interactant>
    <organismsDiffer>false</organismsDiffer>
    <experiments>5</experiments>
</comment>
<comment type="interaction">
    <interactant intactId="EBI-295634">
        <id>Q16543</id>
    </interactant>
    <interactant intactId="EBI-2805516">
        <id>P31321</id>
        <label>PRKAR1B</label>
    </interactant>
    <organismsDiffer>false</organismsDiffer>
    <experiments>3</experiments>
</comment>
<comment type="interaction">
    <interactant intactId="EBI-295634">
        <id>Q16543</id>
    </interactant>
    <interactant intactId="EBI-17165527">
        <id>Q99873-3</id>
        <label>PRMT1</label>
    </interactant>
    <organismsDiffer>false</organismsDiffer>
    <experiments>3</experiments>
</comment>
<comment type="interaction">
    <interactant intactId="EBI-295634">
        <id>Q16543</id>
    </interactant>
    <interactant intactId="EBI-351098">
        <id>O14744</id>
        <label>PRMT5</label>
    </interactant>
    <organismsDiffer>false</organismsDiffer>
    <experiments>3</experiments>
</comment>
<comment type="interaction">
    <interactant intactId="EBI-295634">
        <id>Q16543</id>
    </interactant>
    <interactant intactId="EBI-752074">
        <id>P41219</id>
        <label>PRPH</label>
    </interactant>
    <organismsDiffer>false</organismsDiffer>
    <experiments>3</experiments>
</comment>
<comment type="interaction">
    <interactant intactId="EBI-295634">
        <id>Q16543</id>
    </interactant>
    <interactant intactId="EBI-12754095">
        <id>P86480</id>
        <label>PRR20D</label>
    </interactant>
    <organismsDiffer>false</organismsDiffer>
    <experiments>3</experiments>
</comment>
<comment type="interaction">
    <interactant intactId="EBI-295634">
        <id>Q16543</id>
    </interactant>
    <interactant intactId="EBI-297277">
        <id>P49768</id>
        <label>PSEN1</label>
    </interactant>
    <organismsDiffer>false</organismsDiffer>
    <experiments>3</experiments>
</comment>
<comment type="interaction">
    <interactant intactId="EBI-295634">
        <id>Q16543</id>
    </interactant>
    <interactant intactId="EBI-6424813">
        <id>Q96QS6</id>
        <label>PSKH2</label>
    </interactant>
    <organismsDiffer>false</organismsDiffer>
    <experiments>4</experiments>
</comment>
<comment type="interaction">
    <interactant intactId="EBI-295634">
        <id>Q16543</id>
    </interactant>
    <interactant intactId="EBI-357669">
        <id>P62333</id>
        <label>PSMC6</label>
    </interactant>
    <organismsDiffer>false</organismsDiffer>
    <experiments>3</experiments>
</comment>
<comment type="interaction">
    <interactant intactId="EBI-295634">
        <id>Q16543</id>
    </interactant>
    <interactant intactId="EBI-1383632">
        <id>Q13882</id>
        <label>PTK6</label>
    </interactant>
    <organismsDiffer>false</organismsDiffer>
    <experiments>4</experiments>
</comment>
<comment type="interaction">
    <interactant intactId="EBI-295634">
        <id>Q16543</id>
    </interactant>
    <interactant intactId="EBI-14093916">
        <id>Q9UJ41-4</id>
        <label>RABGEF1</label>
    </interactant>
    <organismsDiffer>false</organismsDiffer>
    <experiments>3</experiments>
</comment>
<comment type="interaction">
    <interactant intactId="EBI-295634">
        <id>Q16543</id>
    </interactant>
    <interactant intactId="EBI-365996">
        <id>P04049</id>
        <label>RAF1</label>
    </interactant>
    <organismsDiffer>false</organismsDiffer>
    <experiments>20</experiments>
</comment>
<comment type="interaction">
    <interactant intactId="EBI-295634">
        <id>Q16543</id>
    </interactant>
    <interactant intactId="EBI-14065960">
        <id>Q96HR9-2</id>
        <label>REEP6</label>
    </interactant>
    <organismsDiffer>false</organismsDiffer>
    <experiments>3</experiments>
</comment>
<comment type="interaction">
    <interactant intactId="EBI-295634">
        <id>Q16543</id>
    </interactant>
    <interactant intactId="EBI-1378139">
        <id>Q9HAT0</id>
        <label>ROPN1</label>
    </interactant>
    <organismsDiffer>false</organismsDiffer>
    <experiments>3</experiments>
</comment>
<comment type="interaction">
    <interactant intactId="EBI-295634">
        <id>Q16543</id>
    </interactant>
    <interactant intactId="EBI-963034">
        <id>Q15418</id>
        <label>RPS6KA1</label>
    </interactant>
    <organismsDiffer>false</organismsDiffer>
    <experiments>7</experiments>
</comment>
<comment type="interaction">
    <interactant intactId="EBI-295634">
        <id>Q16543</id>
    </interactant>
    <interactant intactId="EBI-727037">
        <id>Q9UH03</id>
        <label>SEPTIN3</label>
    </interactant>
    <organismsDiffer>false</organismsDiffer>
    <experiments>3</experiments>
</comment>
<comment type="interaction">
    <interactant intactId="EBI-295634">
        <id>Q16543</id>
    </interactant>
    <interactant intactId="EBI-307104">
        <id>Q13501</id>
        <label>SQSTM1</label>
    </interactant>
    <organismsDiffer>false</organismsDiffer>
    <experiments>8</experiments>
</comment>
<comment type="interaction">
    <interactant intactId="EBI-295634">
        <id>Q16543</id>
    </interactant>
    <interactant intactId="EBI-621482">
        <id>P12931</id>
        <label>SRC</label>
    </interactant>
    <organismsDiffer>false</organismsDiffer>
    <experiments>6</experiments>
</comment>
<comment type="interaction">
    <interactant intactId="EBI-295634">
        <id>Q16543</id>
    </interactant>
    <interactant intactId="EBI-3867173">
        <id>A7MD48</id>
        <label>SRRM4</label>
    </interactant>
    <organismsDiffer>false</organismsDiffer>
    <experiments>3</experiments>
</comment>
<comment type="interaction">
    <interactant intactId="EBI-295634">
        <id>Q16543</id>
    </interactant>
    <interactant intactId="EBI-2515299">
        <id>O43805</id>
        <label>SSNA1</label>
    </interactant>
    <organismsDiffer>false</organismsDiffer>
    <experiments>3</experiments>
</comment>
<comment type="interaction">
    <interactant intactId="EBI-295634">
        <id>Q16543</id>
    </interactant>
    <interactant intactId="EBI-306838">
        <id>Q15831</id>
        <label>STK11</label>
    </interactant>
    <organismsDiffer>false</organismsDiffer>
    <experiments>6</experiments>
</comment>
<comment type="interaction">
    <interactant intactId="EBI-295634">
        <id>Q16543</id>
    </interactant>
    <interactant intactId="EBI-13046508">
        <id>Q8WU08-2</id>
        <label>STK32A</label>
    </interactant>
    <organismsDiffer>false</organismsDiffer>
    <experiments>3</experiments>
</comment>
<comment type="interaction">
    <interactant intactId="EBI-295634">
        <id>Q16543</id>
    </interactant>
    <interactant intactId="EBI-991501">
        <id>Q9Y2H1</id>
        <label>STK38L</label>
    </interactant>
    <organismsDiffer>false</organismsDiffer>
    <experiments>6</experiments>
</comment>
<comment type="interaction">
    <interactant intactId="EBI-295634">
        <id>Q16543</id>
    </interactant>
    <interactant intactId="EBI-712466">
        <id>Q16623</id>
        <label>STX1A</label>
    </interactant>
    <organismsDiffer>false</organismsDiffer>
    <experiments>3</experiments>
</comment>
<comment type="interaction">
    <interactant intactId="EBI-295634">
        <id>Q16543</id>
    </interactant>
    <interactant intactId="EBI-11958386">
        <id>Q6PIF2</id>
        <label>SYCE2</label>
    </interactant>
    <organismsDiffer>false</organismsDiffer>
    <experiments>3</experiments>
</comment>
<comment type="interaction">
    <interactant intactId="EBI-295634">
        <id>Q16543</id>
    </interactant>
    <interactant intactId="EBI-7574149">
        <id>Q8IZU3</id>
        <label>SYCP3</label>
    </interactant>
    <organismsDiffer>false</organismsDiffer>
    <experiments>3</experiments>
</comment>
<comment type="interaction">
    <interactant intactId="EBI-295634">
        <id>Q16543</id>
    </interactant>
    <interactant intactId="EBI-13636688">
        <id>P15884-3</id>
        <label>TCF4</label>
    </interactant>
    <organismsDiffer>false</organismsDiffer>
    <experiments>3</experiments>
</comment>
<comment type="interaction">
    <interactant intactId="EBI-295634">
        <id>Q16543</id>
    </interactant>
    <interactant intactId="EBI-741515">
        <id>Q9NVV9</id>
        <label>THAP1</label>
    </interactant>
    <organismsDiffer>false</organismsDiffer>
    <experiments>3</experiments>
</comment>
<comment type="interaction">
    <interactant intactId="EBI-295634">
        <id>Q16543</id>
    </interactant>
    <interactant intactId="EBI-741350">
        <id>Q9BT49</id>
        <label>THAP7</label>
    </interactant>
    <organismsDiffer>false</organismsDiffer>
    <experiments>3</experiments>
</comment>
<comment type="interaction">
    <interactant intactId="EBI-295634">
        <id>Q16543</id>
    </interactant>
    <interactant intactId="EBI-2505861">
        <id>Q13829</id>
        <label>TNFAIP1</label>
    </interactant>
    <organismsDiffer>false</organismsDiffer>
    <experiments>3</experiments>
</comment>
<comment type="interaction">
    <interactant intactId="EBI-295634">
        <id>Q16543</id>
    </interactant>
    <interactant intactId="EBI-357849">
        <id>Q15025</id>
        <label>TNIP1</label>
    </interactant>
    <organismsDiffer>false</organismsDiffer>
    <experiments>3</experiments>
</comment>
<comment type="interaction">
    <interactant intactId="EBI-295634">
        <id>Q16543</id>
    </interactant>
    <interactant intactId="EBI-355744">
        <id>Q12933</id>
        <label>TRAF2</label>
    </interactant>
    <organismsDiffer>false</organismsDiffer>
    <experiments>3</experiments>
</comment>
<comment type="interaction">
    <interactant intactId="EBI-295634">
        <id>Q16543</id>
    </interactant>
    <interactant intactId="EBI-357631">
        <id>Q13114</id>
        <label>TRAF3</label>
    </interactant>
    <organismsDiffer>false</organismsDiffer>
    <experiments>3</experiments>
</comment>
<comment type="interaction">
    <interactant intactId="EBI-295634">
        <id>Q16543</id>
    </interactant>
    <interactant intactId="EBI-523498">
        <id>O00463</id>
        <label>TRAF5</label>
    </interactant>
    <organismsDiffer>false</organismsDiffer>
    <experiments>3</experiments>
</comment>
<comment type="interaction">
    <interactant intactId="EBI-295634">
        <id>Q16543</id>
    </interactant>
    <interactant intactId="EBI-2130429">
        <id>Q9BYV2</id>
        <label>TRIM54</label>
    </interactant>
    <organismsDiffer>false</organismsDiffer>
    <experiments>3</experiments>
</comment>
<comment type="interaction">
    <interactant intactId="EBI-295634">
        <id>Q16543</id>
    </interactant>
    <interactant intactId="EBI-851883">
        <id>Q9BXA6</id>
        <label>TSSK6</label>
    </interactant>
    <organismsDiffer>false</organismsDiffer>
    <experiments>4</experiments>
</comment>
<comment type="interaction">
    <interactant intactId="EBI-295634">
        <id>Q16543</id>
    </interactant>
    <interactant intactId="EBI-1383475">
        <id>Q6PHR2</id>
        <label>ULK3</label>
    </interactant>
    <organismsDiffer>false</organismsDiffer>
    <experiments>2</experiments>
</comment>
<comment type="interaction">
    <interactant intactId="EBI-295634">
        <id>Q16543</id>
    </interactant>
    <interactant intactId="EBI-739895">
        <id>Q8N6Y0</id>
        <label>USHBP1</label>
    </interactant>
    <organismsDiffer>false</organismsDiffer>
    <experiments>3</experiments>
</comment>
<comment type="interaction">
    <interactant intactId="EBI-295634">
        <id>Q16543</id>
    </interactant>
    <interactant intactId="EBI-515331">
        <id>P07947</id>
        <label>YES1</label>
    </interactant>
    <organismsDiffer>false</organismsDiffer>
    <experiments>6</experiments>
</comment>
<comment type="interaction">
    <interactant intactId="EBI-295634">
        <id>Q16543</id>
    </interactant>
    <interactant intactId="EBI-740037">
        <id>O96006</id>
        <label>ZBED1</label>
    </interactant>
    <organismsDiffer>false</organismsDiffer>
    <experiments>3</experiments>
</comment>
<comment type="interaction">
    <interactant intactId="EBI-295634">
        <id>Q16543</id>
    </interactant>
    <interactant intactId="EBI-3918996">
        <id>Q9HCK0</id>
        <label>ZBTB26</label>
    </interactant>
    <organismsDiffer>false</organismsDiffer>
    <experiments>3</experiments>
</comment>
<comment type="interaction">
    <interactant intactId="EBI-295634">
        <id>Q16543</id>
    </interactant>
    <interactant intactId="EBI-742740">
        <id>Q96BR9</id>
        <label>ZBTB8A</label>
    </interactant>
    <organismsDiffer>false</organismsDiffer>
    <experiments>3</experiments>
</comment>
<comment type="interaction">
    <interactant intactId="EBI-295634">
        <id>Q16543</id>
    </interactant>
    <interactant intactId="EBI-750821">
        <id>Q8N554</id>
        <label>ZNF276</label>
    </interactant>
    <organismsDiffer>false</organismsDiffer>
    <experiments>3</experiments>
</comment>
<comment type="interaction">
    <interactant intactId="EBI-295634">
        <id>Q16543</id>
    </interactant>
    <interactant intactId="EBI-625509">
        <id>Q8N720</id>
        <label>ZNF655</label>
    </interactant>
    <organismsDiffer>false</organismsDiffer>
    <experiments>3</experiments>
</comment>
<comment type="interaction">
    <interactant intactId="EBI-295634">
        <id>Q16543</id>
    </interactant>
    <interactant intactId="EBI-11962574">
        <id>Q96EG3</id>
        <label>ZNF837</label>
    </interactant>
    <organismsDiffer>false</organismsDiffer>
    <experiments>3</experiments>
</comment>
<comment type="interaction">
    <interactant intactId="EBI-295634">
        <id>Q16543</id>
    </interactant>
    <interactant intactId="EBI-6428016">
        <id>Q8N446</id>
        <label>ZNF843</label>
    </interactant>
    <organismsDiffer>false</organismsDiffer>
    <experiments>2</experiments>
</comment>
<comment type="interaction">
    <interactant intactId="EBI-295634">
        <id>Q16543</id>
    </interactant>
    <interactant intactId="EBI-640100">
        <id>P33279</id>
        <label>EIF2AK1</label>
    </interactant>
    <organismsDiffer>true</organismsDiffer>
    <experiments>3</experiments>
</comment>
<comment type="interaction">
    <interactant intactId="EBI-295634">
        <id>Q16543</id>
    </interactant>
    <interactant intactId="EBI-25475856">
        <id>P0DTC9</id>
        <label>N</label>
    </interactant>
    <organismsDiffer>true</organismsDiffer>
    <experiments>4</experiments>
</comment>
<comment type="interaction">
    <interactant intactId="EBI-295634">
        <id>Q16543</id>
    </interactant>
    <interactant intactId="EBI-640126">
        <id>P11500</id>
    </interactant>
    <organismsDiffer>true</organismsDiffer>
    <experiments>3</experiments>
</comment>
<comment type="subcellular location">
    <subcellularLocation>
        <location evidence="12">Cytoplasm</location>
    </subcellularLocation>
</comment>
<comment type="PTM">
    <text evidence="6">Constitutively sumoylated by UBE2I.</text>
</comment>
<comment type="similarity">
    <text evidence="14">Belongs to the CDC37 family.</text>
</comment>
<protein>
    <recommendedName>
        <fullName>Hsp90 co-chaperone Cdc37</fullName>
    </recommendedName>
    <alternativeName>
        <fullName>Hsp90 chaperone protein kinase-targeting subunit</fullName>
    </alternativeName>
    <alternativeName>
        <fullName>p50Cdc37</fullName>
    </alternativeName>
    <component>
        <recommendedName>
            <fullName>Hsp90 co-chaperone Cdc37, N-terminally processed</fullName>
        </recommendedName>
    </component>
</protein>
<dbReference type="EMBL" id="U43077">
    <property type="protein sequence ID" value="AAB63979.1"/>
    <property type="molecule type" value="mRNA"/>
</dbReference>
<dbReference type="EMBL" id="U63131">
    <property type="protein sequence ID" value="AAB04798.1"/>
    <property type="molecule type" value="mRNA"/>
</dbReference>
<dbReference type="EMBL" id="AY864824">
    <property type="protein sequence ID" value="AAW34362.1"/>
    <property type="molecule type" value="Genomic_DNA"/>
</dbReference>
<dbReference type="EMBL" id="BT006796">
    <property type="protein sequence ID" value="AAP35442.1"/>
    <property type="molecule type" value="mRNA"/>
</dbReference>
<dbReference type="EMBL" id="CH471106">
    <property type="protein sequence ID" value="EAW84101.1"/>
    <property type="molecule type" value="Genomic_DNA"/>
</dbReference>
<dbReference type="EMBL" id="BC000083">
    <property type="protein sequence ID" value="AAH00083.1"/>
    <property type="molecule type" value="mRNA"/>
</dbReference>
<dbReference type="EMBL" id="BC008793">
    <property type="protein sequence ID" value="AAH08793.1"/>
    <property type="molecule type" value="mRNA"/>
</dbReference>
<dbReference type="CCDS" id="CCDS12237.1"/>
<dbReference type="PIR" id="G02313">
    <property type="entry name" value="G02313"/>
</dbReference>
<dbReference type="RefSeq" id="NP_008996.1">
    <property type="nucleotide sequence ID" value="NM_007065.4"/>
</dbReference>
<dbReference type="PDB" id="1US7">
    <property type="method" value="X-ray"/>
    <property type="resolution" value="2.30 A"/>
    <property type="chains" value="B=127-378"/>
</dbReference>
<dbReference type="PDB" id="2K5B">
    <property type="method" value="NMR"/>
    <property type="chains" value="B=148-276"/>
</dbReference>
<dbReference type="PDB" id="2N5X">
    <property type="method" value="NMR"/>
    <property type="chains" value="A=288-378"/>
</dbReference>
<dbReference type="PDB" id="2NCA">
    <property type="method" value="NMR"/>
    <property type="chains" value="A=1-126"/>
</dbReference>
<dbReference type="PDB" id="2W0G">
    <property type="method" value="X-ray"/>
    <property type="resolution" value="1.88 A"/>
    <property type="chains" value="A=148-276"/>
</dbReference>
<dbReference type="PDB" id="5FWK">
    <property type="method" value="EM"/>
    <property type="resolution" value="3.90 A"/>
    <property type="chains" value="E=1-378"/>
</dbReference>
<dbReference type="PDB" id="5FWL">
    <property type="method" value="EM"/>
    <property type="resolution" value="9.00 A"/>
    <property type="chains" value="E=1-378"/>
</dbReference>
<dbReference type="PDB" id="5FWM">
    <property type="method" value="EM"/>
    <property type="resolution" value="8.00 A"/>
    <property type="chains" value="E=1-378"/>
</dbReference>
<dbReference type="PDB" id="5FWP">
    <property type="method" value="EM"/>
    <property type="resolution" value="7.20 A"/>
    <property type="chains" value="E=1-378"/>
</dbReference>
<dbReference type="PDB" id="5HPE">
    <property type="method" value="X-ray"/>
    <property type="resolution" value="2.27 A"/>
    <property type="chains" value="A=5-20"/>
</dbReference>
<dbReference type="PDB" id="7Z37">
    <property type="method" value="EM"/>
    <property type="resolution" value="3.67 A"/>
    <property type="chains" value="DP1=1-378"/>
</dbReference>
<dbReference type="PDB" id="7Z38">
    <property type="method" value="EM"/>
    <property type="resolution" value="3.16 A"/>
    <property type="chains" value="D=1-378"/>
</dbReference>
<dbReference type="PDB" id="7ZR0">
    <property type="method" value="EM"/>
    <property type="resolution" value="3.40 A"/>
    <property type="chains" value="C=1-378"/>
</dbReference>
<dbReference type="PDB" id="7ZR5">
    <property type="method" value="EM"/>
    <property type="resolution" value="3.90 A"/>
    <property type="chains" value="C=1-378"/>
</dbReference>
<dbReference type="PDB" id="7ZR6">
    <property type="method" value="EM"/>
    <property type="resolution" value="4.20 A"/>
    <property type="chains" value="C=1-378"/>
</dbReference>
<dbReference type="PDB" id="8GAE">
    <property type="method" value="EM"/>
    <property type="resolution" value="3.30 A"/>
    <property type="chains" value="C=1-378"/>
</dbReference>
<dbReference type="PDB" id="8GFT">
    <property type="method" value="EM"/>
    <property type="resolution" value="3.80 A"/>
    <property type="chains" value="C=1-378"/>
</dbReference>
<dbReference type="PDB" id="8U1L">
    <property type="method" value="EM"/>
    <property type="resolution" value="3.70 A"/>
    <property type="chains" value="D=1-378"/>
</dbReference>
<dbReference type="PDBsum" id="1US7"/>
<dbReference type="PDBsum" id="2K5B"/>
<dbReference type="PDBsum" id="2N5X"/>
<dbReference type="PDBsum" id="2NCA"/>
<dbReference type="PDBsum" id="2W0G"/>
<dbReference type="PDBsum" id="5FWK"/>
<dbReference type="PDBsum" id="5FWL"/>
<dbReference type="PDBsum" id="5FWM"/>
<dbReference type="PDBsum" id="5FWP"/>
<dbReference type="PDBsum" id="5HPE"/>
<dbReference type="PDBsum" id="7Z37"/>
<dbReference type="PDBsum" id="7Z38"/>
<dbReference type="PDBsum" id="7ZR0"/>
<dbReference type="PDBsum" id="7ZR5"/>
<dbReference type="PDBsum" id="7ZR6"/>
<dbReference type="PDBsum" id="8GAE"/>
<dbReference type="PDBsum" id="8GFT"/>
<dbReference type="PDBsum" id="8U1L"/>
<dbReference type="BMRB" id="Q16543"/>
<dbReference type="EMDB" id="EMD-14472"/>
<dbReference type="EMDB" id="EMD-14473"/>
<dbReference type="EMDB" id="EMD-14875"/>
<dbReference type="EMDB" id="EMD-14883"/>
<dbReference type="EMDB" id="EMD-14884"/>
<dbReference type="EMDB" id="EMD-29895"/>
<dbReference type="EMDB" id="EMD-29984"/>
<dbReference type="EMDB" id="EMD-3337"/>
<dbReference type="EMDB" id="EMD-3338"/>
<dbReference type="EMDB" id="EMD-3339"/>
<dbReference type="EMDB" id="EMD-3340"/>
<dbReference type="EMDB" id="EMD-3341"/>
<dbReference type="EMDB" id="EMD-3342"/>
<dbReference type="EMDB" id="EMD-3343"/>
<dbReference type="EMDB" id="EMD-3344"/>
<dbReference type="EMDB" id="EMD-41816"/>
<dbReference type="SASBDB" id="Q16543"/>
<dbReference type="SMR" id="Q16543"/>
<dbReference type="BioGRID" id="116312">
    <property type="interactions" value="662"/>
</dbReference>
<dbReference type="ComplexPortal" id="CPX-3285">
    <property type="entry name" value="HSP90B-CDC37 chaperone complex"/>
</dbReference>
<dbReference type="ComplexPortal" id="CPX-3288">
    <property type="entry name" value="HSP90A-CDC37 chaperone complex"/>
</dbReference>
<dbReference type="CORUM" id="Q16543"/>
<dbReference type="DIP" id="DIP-27560N"/>
<dbReference type="FunCoup" id="Q16543">
    <property type="interactions" value="2095"/>
</dbReference>
<dbReference type="IntAct" id="Q16543">
    <property type="interactions" value="520"/>
</dbReference>
<dbReference type="MINT" id="Q16543"/>
<dbReference type="STRING" id="9606.ENSP00000222005"/>
<dbReference type="BindingDB" id="Q16543"/>
<dbReference type="ChEMBL" id="CHEMBL1795123"/>
<dbReference type="MoonDB" id="Q16543">
    <property type="type" value="Predicted"/>
</dbReference>
<dbReference type="TCDB" id="8.A.163.1.1">
    <property type="family name" value="the hsp90/cdc37 (hsp90/cdc37) family"/>
</dbReference>
<dbReference type="GlyGen" id="Q16543">
    <property type="glycosylation" value="1 site, 1 O-linked glycan (1 site)"/>
</dbReference>
<dbReference type="iPTMnet" id="Q16543"/>
<dbReference type="MetOSite" id="Q16543"/>
<dbReference type="PhosphoSitePlus" id="Q16543"/>
<dbReference type="SwissPalm" id="Q16543"/>
<dbReference type="BioMuta" id="CDC37"/>
<dbReference type="DMDM" id="21542000"/>
<dbReference type="jPOST" id="Q16543"/>
<dbReference type="MassIVE" id="Q16543"/>
<dbReference type="PaxDb" id="9606-ENSP00000222005"/>
<dbReference type="PeptideAtlas" id="Q16543"/>
<dbReference type="ProteomicsDB" id="60906"/>
<dbReference type="Pumba" id="Q16543"/>
<dbReference type="TopDownProteomics" id="Q16543"/>
<dbReference type="Antibodypedia" id="1136">
    <property type="antibodies" value="587 antibodies from 40 providers"/>
</dbReference>
<dbReference type="DNASU" id="11140"/>
<dbReference type="Ensembl" id="ENST00000222005.7">
    <property type="protein sequence ID" value="ENSP00000222005.1"/>
    <property type="gene ID" value="ENSG00000105401.10"/>
</dbReference>
<dbReference type="GeneID" id="11140"/>
<dbReference type="KEGG" id="hsa:11140"/>
<dbReference type="MANE-Select" id="ENST00000222005.7">
    <property type="protein sequence ID" value="ENSP00000222005.1"/>
    <property type="RefSeq nucleotide sequence ID" value="NM_007065.4"/>
    <property type="RefSeq protein sequence ID" value="NP_008996.1"/>
</dbReference>
<dbReference type="UCSC" id="uc002mof.2">
    <property type="organism name" value="human"/>
</dbReference>
<dbReference type="AGR" id="HGNC:1735"/>
<dbReference type="CTD" id="11140"/>
<dbReference type="DisGeNET" id="11140"/>
<dbReference type="GeneCards" id="CDC37"/>
<dbReference type="HGNC" id="HGNC:1735">
    <property type="gene designation" value="CDC37"/>
</dbReference>
<dbReference type="HPA" id="ENSG00000105401">
    <property type="expression patterns" value="Low tissue specificity"/>
</dbReference>
<dbReference type="MIM" id="605065">
    <property type="type" value="gene"/>
</dbReference>
<dbReference type="neXtProt" id="NX_Q16543"/>
<dbReference type="OpenTargets" id="ENSG00000105401"/>
<dbReference type="PharmGKB" id="PA402"/>
<dbReference type="VEuPathDB" id="HostDB:ENSG00000105401"/>
<dbReference type="eggNOG" id="KOG2260">
    <property type="taxonomic scope" value="Eukaryota"/>
</dbReference>
<dbReference type="GeneTree" id="ENSGT00390000013443"/>
<dbReference type="InParanoid" id="Q16543"/>
<dbReference type="OMA" id="AEQCIII"/>
<dbReference type="OrthoDB" id="440202at2759"/>
<dbReference type="PAN-GO" id="Q16543">
    <property type="GO annotations" value="6 GO annotations based on evolutionary models"/>
</dbReference>
<dbReference type="PhylomeDB" id="Q16543"/>
<dbReference type="TreeFam" id="TF101059"/>
<dbReference type="PathwayCommons" id="Q16543"/>
<dbReference type="Reactome" id="R-HSA-1227986">
    <property type="pathway name" value="Signaling by ERBB2"/>
</dbReference>
<dbReference type="Reactome" id="R-HSA-1236382">
    <property type="pathway name" value="Constitutive Signaling by Ligand-Responsive EGFR Cancer Variants"/>
</dbReference>
<dbReference type="Reactome" id="R-HSA-5637810">
    <property type="pathway name" value="Constitutive Signaling by EGFRvIII"/>
</dbReference>
<dbReference type="Reactome" id="R-HSA-5675482">
    <property type="pathway name" value="Regulation of necroptotic cell death"/>
</dbReference>
<dbReference type="Reactome" id="R-HSA-8863795">
    <property type="pathway name" value="Downregulation of ERBB2 signaling"/>
</dbReference>
<dbReference type="Reactome" id="R-HSA-9013418">
    <property type="pathway name" value="RHOBTB2 GTPase cycle"/>
</dbReference>
<dbReference type="Reactome" id="R-HSA-9634285">
    <property type="pathway name" value="Constitutive Signaling by Overexpressed ERBB2"/>
</dbReference>
<dbReference type="Reactome" id="R-HSA-9652282">
    <property type="pathway name" value="Drug-mediated inhibition of ERBB2 signaling"/>
</dbReference>
<dbReference type="Reactome" id="R-HSA-9664565">
    <property type="pathway name" value="Signaling by ERBB2 KD Mutants"/>
</dbReference>
<dbReference type="Reactome" id="R-HSA-9665233">
    <property type="pathway name" value="Resistance of ERBB2 KD mutants to trastuzumab"/>
</dbReference>
<dbReference type="Reactome" id="R-HSA-9665244">
    <property type="pathway name" value="Resistance of ERBB2 KD mutants to sapitinib"/>
</dbReference>
<dbReference type="Reactome" id="R-HSA-9665245">
    <property type="pathway name" value="Resistance of ERBB2 KD mutants to tesevatinib"/>
</dbReference>
<dbReference type="Reactome" id="R-HSA-9665246">
    <property type="pathway name" value="Resistance of ERBB2 KD mutants to neratinib"/>
</dbReference>
<dbReference type="Reactome" id="R-HSA-9665247">
    <property type="pathway name" value="Resistance of ERBB2 KD mutants to osimertinib"/>
</dbReference>
<dbReference type="Reactome" id="R-HSA-9665249">
    <property type="pathway name" value="Resistance of ERBB2 KD mutants to afatinib"/>
</dbReference>
<dbReference type="Reactome" id="R-HSA-9665250">
    <property type="pathway name" value="Resistance of ERBB2 KD mutants to AEE788"/>
</dbReference>
<dbReference type="Reactome" id="R-HSA-9665251">
    <property type="pathway name" value="Resistance of ERBB2 KD mutants to lapatinib"/>
</dbReference>
<dbReference type="Reactome" id="R-HSA-9665348">
    <property type="pathway name" value="Signaling by ERBB2 ECD mutants"/>
</dbReference>
<dbReference type="Reactome" id="R-HSA-9665686">
    <property type="pathway name" value="Signaling by ERBB2 TMD/JMD mutants"/>
</dbReference>
<dbReference type="Reactome" id="R-HSA-9665737">
    <property type="pathway name" value="Drug resistance in ERBB2 TMD/JMD mutants"/>
</dbReference>
<dbReference type="SignaLink" id="Q16543"/>
<dbReference type="SIGNOR" id="Q16543"/>
<dbReference type="BioGRID-ORCS" id="11140">
    <property type="hits" value="780 hits in 1155 CRISPR screens"/>
</dbReference>
<dbReference type="CD-CODE" id="DEE660B4">
    <property type="entry name" value="Stress granule"/>
</dbReference>
<dbReference type="ChiTaRS" id="CDC37">
    <property type="organism name" value="human"/>
</dbReference>
<dbReference type="EvolutionaryTrace" id="Q16543"/>
<dbReference type="GeneWiki" id="CDC37"/>
<dbReference type="GenomeRNAi" id="11140"/>
<dbReference type="Pharos" id="Q16543">
    <property type="development level" value="Tbio"/>
</dbReference>
<dbReference type="PRO" id="PR:Q16543"/>
<dbReference type="Proteomes" id="UP000005640">
    <property type="component" value="Chromosome 19"/>
</dbReference>
<dbReference type="RNAct" id="Q16543">
    <property type="molecule type" value="protein"/>
</dbReference>
<dbReference type="Bgee" id="ENSG00000105401">
    <property type="expression patterns" value="Expressed in sural nerve and 199 other cell types or tissues"/>
</dbReference>
<dbReference type="ExpressionAtlas" id="Q16543">
    <property type="expression patterns" value="baseline and differential"/>
</dbReference>
<dbReference type="GO" id="GO:0005737">
    <property type="term" value="C:cytoplasm"/>
    <property type="evidence" value="ECO:0000314"/>
    <property type="project" value="LIFEdb"/>
</dbReference>
<dbReference type="GO" id="GO:0005829">
    <property type="term" value="C:cytosol"/>
    <property type="evidence" value="ECO:0000314"/>
    <property type="project" value="HPA"/>
</dbReference>
<dbReference type="GO" id="GO:0070062">
    <property type="term" value="C:extracellular exosome"/>
    <property type="evidence" value="ECO:0007005"/>
    <property type="project" value="UniProtKB"/>
</dbReference>
<dbReference type="GO" id="GO:1990565">
    <property type="term" value="C:HSP90-CDC37 chaperone complex"/>
    <property type="evidence" value="ECO:0000314"/>
    <property type="project" value="ParkinsonsUK-UCL"/>
</dbReference>
<dbReference type="GO" id="GO:0101031">
    <property type="term" value="C:protein folding chaperone complex"/>
    <property type="evidence" value="ECO:0000314"/>
    <property type="project" value="UniProtKB"/>
</dbReference>
<dbReference type="GO" id="GO:0031072">
    <property type="term" value="F:heat shock protein binding"/>
    <property type="evidence" value="ECO:0000353"/>
    <property type="project" value="UniProtKB"/>
</dbReference>
<dbReference type="GO" id="GO:0051879">
    <property type="term" value="F:Hsp90 protein binding"/>
    <property type="evidence" value="ECO:0007669"/>
    <property type="project" value="Ensembl"/>
</dbReference>
<dbReference type="GO" id="GO:0019900">
    <property type="term" value="F:kinase binding"/>
    <property type="evidence" value="ECO:0000353"/>
    <property type="project" value="ParkinsonsUK-UCL"/>
</dbReference>
<dbReference type="GO" id="GO:0019901">
    <property type="term" value="F:protein kinase binding"/>
    <property type="evidence" value="ECO:0007669"/>
    <property type="project" value="InterPro"/>
</dbReference>
<dbReference type="GO" id="GO:0019887">
    <property type="term" value="F:protein kinase regulator activity"/>
    <property type="evidence" value="ECO:0007669"/>
    <property type="project" value="Ensembl"/>
</dbReference>
<dbReference type="GO" id="GO:0051087">
    <property type="term" value="F:protein-folding chaperone binding"/>
    <property type="evidence" value="ECO:0000318"/>
    <property type="project" value="GO_Central"/>
</dbReference>
<dbReference type="GO" id="GO:0097110">
    <property type="term" value="F:scaffold protein binding"/>
    <property type="evidence" value="ECO:0000353"/>
    <property type="project" value="UniProtKB"/>
</dbReference>
<dbReference type="GO" id="GO:0051082">
    <property type="term" value="F:unfolded protein binding"/>
    <property type="evidence" value="ECO:0000318"/>
    <property type="project" value="GO_Central"/>
</dbReference>
<dbReference type="GO" id="GO:1905091">
    <property type="term" value="P:positive regulation of type 2 mitophagy"/>
    <property type="evidence" value="ECO:0007669"/>
    <property type="project" value="Ensembl"/>
</dbReference>
<dbReference type="GO" id="GO:0010608">
    <property type="term" value="P:post-transcriptional regulation of gene expression"/>
    <property type="evidence" value="ECO:0007669"/>
    <property type="project" value="Ensembl"/>
</dbReference>
<dbReference type="GO" id="GO:0006457">
    <property type="term" value="P:protein folding"/>
    <property type="evidence" value="ECO:0000318"/>
    <property type="project" value="GO_Central"/>
</dbReference>
<dbReference type="GO" id="GO:0050821">
    <property type="term" value="P:protein stabilization"/>
    <property type="evidence" value="ECO:0000318"/>
    <property type="project" value="GO_Central"/>
</dbReference>
<dbReference type="GO" id="GO:0006605">
    <property type="term" value="P:protein targeting"/>
    <property type="evidence" value="ECO:0000304"/>
    <property type="project" value="ProtInc"/>
</dbReference>
<dbReference type="GO" id="GO:0000079">
    <property type="term" value="P:regulation of cyclin-dependent protein serine/threonine kinase activity"/>
    <property type="evidence" value="ECO:0000304"/>
    <property type="project" value="ProtInc"/>
</dbReference>
<dbReference type="GO" id="GO:0060338">
    <property type="term" value="P:regulation of type I interferon-mediated signaling pathway"/>
    <property type="evidence" value="ECO:0000315"/>
    <property type="project" value="MGI"/>
</dbReference>
<dbReference type="GO" id="GO:0060334">
    <property type="term" value="P:regulation of type II interferon-mediated signaling pathway"/>
    <property type="evidence" value="ECO:0000315"/>
    <property type="project" value="MGI"/>
</dbReference>
<dbReference type="DisProt" id="DP01420"/>
<dbReference type="FunFam" id="1.20.58.610:FF:000001">
    <property type="entry name" value="Hsp90 co-chaperone Cdc37-like 1"/>
    <property type="match status" value="1"/>
</dbReference>
<dbReference type="Gene3D" id="6.10.140.250">
    <property type="match status" value="1"/>
</dbReference>
<dbReference type="Gene3D" id="1.20.58.610">
    <property type="entry name" value="Cdc37, Hsp90 binding domain"/>
    <property type="match status" value="1"/>
</dbReference>
<dbReference type="InterPro" id="IPR004918">
    <property type="entry name" value="Cdc37"/>
</dbReference>
<dbReference type="InterPro" id="IPR013873">
    <property type="entry name" value="Cdc37_C"/>
</dbReference>
<dbReference type="InterPro" id="IPR013874">
    <property type="entry name" value="Cdc37_Hsp90-bd"/>
</dbReference>
<dbReference type="InterPro" id="IPR038189">
    <property type="entry name" value="Cdc37_Hsp90-bd_sf"/>
</dbReference>
<dbReference type="InterPro" id="IPR013855">
    <property type="entry name" value="Cdc37_N_dom"/>
</dbReference>
<dbReference type="PANTHER" id="PTHR12800">
    <property type="entry name" value="CDC37-RELATED"/>
    <property type="match status" value="1"/>
</dbReference>
<dbReference type="PANTHER" id="PTHR12800:SF3">
    <property type="entry name" value="HSP90 CO-CHAPERONE CDC37"/>
    <property type="match status" value="1"/>
</dbReference>
<dbReference type="Pfam" id="PF08564">
    <property type="entry name" value="CDC37_C"/>
    <property type="match status" value="1"/>
</dbReference>
<dbReference type="Pfam" id="PF08565">
    <property type="entry name" value="CDC37_M"/>
    <property type="match status" value="1"/>
</dbReference>
<dbReference type="Pfam" id="PF03234">
    <property type="entry name" value="CDC37_N"/>
    <property type="match status" value="1"/>
</dbReference>
<dbReference type="SMART" id="SM01069">
    <property type="entry name" value="CDC37_C"/>
    <property type="match status" value="1"/>
</dbReference>
<dbReference type="SMART" id="SM01070">
    <property type="entry name" value="CDC37_M"/>
    <property type="match status" value="1"/>
</dbReference>
<dbReference type="SMART" id="SM01071">
    <property type="entry name" value="CDC37_N"/>
    <property type="match status" value="1"/>
</dbReference>
<dbReference type="SUPFAM" id="SSF101391">
    <property type="entry name" value="Hsp90 co-chaperone CDC37"/>
    <property type="match status" value="1"/>
</dbReference>
<gene>
    <name type="primary">CDC37</name>
    <name type="synonym">CDC37A</name>
</gene>
<sequence>MVDYSVWDHIEVSDDEDETHPNIDTASLFRWRHQARVERMEQFQKEKEELDRGCRECKRKVAECQRKLKELEVAEGGKAELERLQAEAQQLRKEERSWEQKLEEMRKKEKSMPWNVDTLSKDGFSKSMVNTKPEKTEEDSEEVREQKHKTFVEKYEKQIKHFGMLRRWDDSQKYLSDNVHLVCEETANYLVIWCIDLEVEEKCALMEQVAHQTIVMQFILELAKSLKVDPRACFRQFFTKIKTADRQYMEGFNDELEAFKERVRGRAKLRIEKAMKEYEEEERKKRLGPGGLDPVEVYESLPEELQKCFDVKDVQMLQDAISKMDPTDAKYHMQRCIDSGLWVPNSKASEAKEGEEAGPGDPLLEAVPKTGDEKDVSV</sequence>
<organism>
    <name type="scientific">Homo sapiens</name>
    <name type="common">Human</name>
    <dbReference type="NCBI Taxonomy" id="9606"/>
    <lineage>
        <taxon>Eukaryota</taxon>
        <taxon>Metazoa</taxon>
        <taxon>Chordata</taxon>
        <taxon>Craniata</taxon>
        <taxon>Vertebrata</taxon>
        <taxon>Euteleostomi</taxon>
        <taxon>Mammalia</taxon>
        <taxon>Eutheria</taxon>
        <taxon>Euarchontoglires</taxon>
        <taxon>Primates</taxon>
        <taxon>Haplorrhini</taxon>
        <taxon>Catarrhini</taxon>
        <taxon>Hominidae</taxon>
        <taxon>Homo</taxon>
    </lineage>
</organism>
<evidence type="ECO:0000250" key="1">
    <source>
        <dbReference type="UniProtKB" id="Q63692"/>
    </source>
</evidence>
<evidence type="ECO:0000256" key="2">
    <source>
        <dbReference type="SAM" id="MobiDB-lite"/>
    </source>
</evidence>
<evidence type="ECO:0000269" key="3">
    <source>
    </source>
</evidence>
<evidence type="ECO:0000269" key="4">
    <source>
    </source>
</evidence>
<evidence type="ECO:0000269" key="5">
    <source>
    </source>
</evidence>
<evidence type="ECO:0000269" key="6">
    <source>
    </source>
</evidence>
<evidence type="ECO:0000269" key="7">
    <source>
    </source>
</evidence>
<evidence type="ECO:0000269" key="8">
    <source>
    </source>
</evidence>
<evidence type="ECO:0000269" key="9">
    <source>
    </source>
</evidence>
<evidence type="ECO:0000269" key="10">
    <source>
    </source>
</evidence>
<evidence type="ECO:0000269" key="11">
    <source>
    </source>
</evidence>
<evidence type="ECO:0000269" key="12">
    <source>
    </source>
</evidence>
<evidence type="ECO:0000269" key="13">
    <source ref="3"/>
</evidence>
<evidence type="ECO:0000305" key="14"/>
<evidence type="ECO:0007744" key="15">
    <source>
    </source>
</evidence>
<evidence type="ECO:0007744" key="16">
    <source>
    </source>
</evidence>
<evidence type="ECO:0007744" key="17">
    <source>
    </source>
</evidence>
<evidence type="ECO:0007744" key="18">
    <source>
    </source>
</evidence>
<evidence type="ECO:0007744" key="19">
    <source>
    </source>
</evidence>
<evidence type="ECO:0007744" key="20">
    <source>
    </source>
</evidence>
<evidence type="ECO:0007829" key="21">
    <source>
        <dbReference type="PDB" id="1US7"/>
    </source>
</evidence>
<evidence type="ECO:0007829" key="22">
    <source>
        <dbReference type="PDB" id="2N5X"/>
    </source>
</evidence>
<evidence type="ECO:0007829" key="23">
    <source>
        <dbReference type="PDB" id="2NCA"/>
    </source>
</evidence>
<evidence type="ECO:0007829" key="24">
    <source>
        <dbReference type="PDB" id="2W0G"/>
    </source>
</evidence>
<evidence type="ECO:0007829" key="25">
    <source>
        <dbReference type="PDB" id="7Z38"/>
    </source>
</evidence>
<evidence type="ECO:0007829" key="26">
    <source>
        <dbReference type="PDB" id="8GAE"/>
    </source>
</evidence>
<proteinExistence type="evidence at protein level"/>
<name>CDC37_HUMAN</name>
<keyword id="KW-0002">3D-structure</keyword>
<keyword id="KW-0007">Acetylation</keyword>
<keyword id="KW-0143">Chaperone</keyword>
<keyword id="KW-0963">Cytoplasm</keyword>
<keyword id="KW-0597">Phosphoprotein</keyword>
<keyword id="KW-1267">Proteomics identification</keyword>
<keyword id="KW-1185">Reference proteome</keyword>
<keyword id="KW-0832">Ubl conjugation</keyword>
<accession>Q16543</accession>
<accession>Q53YA2</accession>
<reference key="1">
    <citation type="journal article" date="1996" name="Genes Dev.">
        <title>Mammalian p50Cdc37 is a protein kinase-targeting subunit of Hsp90 that binds and stabilizes Cdk4.</title>
        <authorList>
            <person name="Stepanova L."/>
            <person name="Leng X."/>
            <person name="Parker S.B."/>
            <person name="Harper J.W."/>
        </authorList>
    </citation>
    <scope>NUCLEOTIDE SEQUENCE [MRNA]</scope>
    <scope>FUNCTION</scope>
</reference>
<reference key="2">
    <citation type="journal article" date="1996" name="J. Biol. Chem.">
        <title>Physical interaction of mammalian CDC37 with CDK4.</title>
        <authorList>
            <person name="Dai K."/>
            <person name="Kobayashi R."/>
            <person name="Beach D."/>
        </authorList>
    </citation>
    <scope>NUCLEOTIDE SEQUENCE [MRNA]</scope>
</reference>
<reference key="3">
    <citation type="submission" date="2004-12" db="EMBL/GenBank/DDBJ databases">
        <authorList>
            <consortium name="NIEHS SNPs program"/>
        </authorList>
    </citation>
    <scope>NUCLEOTIDE SEQUENCE [GENOMIC DNA]</scope>
    <scope>VARIANT GLU-360</scope>
</reference>
<reference key="4">
    <citation type="submission" date="2003-05" db="EMBL/GenBank/DDBJ databases">
        <title>Cloning of human full-length CDSs in BD Creator(TM) system donor vector.</title>
        <authorList>
            <person name="Kalnine N."/>
            <person name="Chen X."/>
            <person name="Rolfs A."/>
            <person name="Halleck A."/>
            <person name="Hines L."/>
            <person name="Eisenstein S."/>
            <person name="Koundinya M."/>
            <person name="Raphael J."/>
            <person name="Moreira D."/>
            <person name="Kelley T."/>
            <person name="LaBaer J."/>
            <person name="Lin Y."/>
            <person name="Phelan M."/>
            <person name="Farmer A."/>
        </authorList>
    </citation>
    <scope>NUCLEOTIDE SEQUENCE [LARGE SCALE MRNA]</scope>
</reference>
<reference key="5">
    <citation type="submission" date="2005-07" db="EMBL/GenBank/DDBJ databases">
        <authorList>
            <person name="Mural R.J."/>
            <person name="Istrail S."/>
            <person name="Sutton G.G."/>
            <person name="Florea L."/>
            <person name="Halpern A.L."/>
            <person name="Mobarry C.M."/>
            <person name="Lippert R."/>
            <person name="Walenz B."/>
            <person name="Shatkay H."/>
            <person name="Dew I."/>
            <person name="Miller J.R."/>
            <person name="Flanigan M.J."/>
            <person name="Edwards N.J."/>
            <person name="Bolanos R."/>
            <person name="Fasulo D."/>
            <person name="Halldorsson B.V."/>
            <person name="Hannenhalli S."/>
            <person name="Turner R."/>
            <person name="Yooseph S."/>
            <person name="Lu F."/>
            <person name="Nusskern D.R."/>
            <person name="Shue B.C."/>
            <person name="Zheng X.H."/>
            <person name="Zhong F."/>
            <person name="Delcher A.L."/>
            <person name="Huson D.H."/>
            <person name="Kravitz S.A."/>
            <person name="Mouchard L."/>
            <person name="Reinert K."/>
            <person name="Remington K.A."/>
            <person name="Clark A.G."/>
            <person name="Waterman M.S."/>
            <person name="Eichler E.E."/>
            <person name="Adams M.D."/>
            <person name="Hunkapiller M.W."/>
            <person name="Myers E.W."/>
            <person name="Venter J.C."/>
        </authorList>
    </citation>
    <scope>NUCLEOTIDE SEQUENCE [LARGE SCALE GENOMIC DNA]</scope>
</reference>
<reference key="6">
    <citation type="journal article" date="2004" name="Genome Res.">
        <title>The status, quality, and expansion of the NIH full-length cDNA project: the Mammalian Gene Collection (MGC).</title>
        <authorList>
            <consortium name="The MGC Project Team"/>
        </authorList>
    </citation>
    <scope>NUCLEOTIDE SEQUENCE [LARGE SCALE MRNA]</scope>
    <source>
        <tissue>Lymph</tissue>
        <tissue>Placenta</tissue>
    </source>
</reference>
<reference key="7">
    <citation type="journal article" date="1997" name="Oncogene">
        <title>Interaction between Cdc37 and Cdk4 in human cells.</title>
        <authorList>
            <person name="Lamphere L."/>
            <person name="Fiore F."/>
            <person name="Xu X."/>
            <person name="Brizuela L."/>
            <person name="Keezer S."/>
            <person name="Sardet C."/>
            <person name="Draetta G.F."/>
            <person name="Gyuris J."/>
        </authorList>
    </citation>
    <scope>INTERACTION WITH CDK4 AND CDK6</scope>
</reference>
<reference key="8">
    <citation type="journal article" date="1998" name="Oncogene">
        <title>Active cdk6 complexes are predominantly nuclear and represent only a minority of the cdk6 in T cells.</title>
        <authorList>
            <person name="Mahony D."/>
            <person name="Parry D.A."/>
            <person name="Lees E."/>
        </authorList>
    </citation>
    <scope>SUBCELLULAR LOCATION</scope>
    <scope>INTERACTION WITH CDK6 AND HSP90AB1</scope>
</reference>
<reference key="9">
    <citation type="journal article" date="1999" name="Mol. Cell. Biol.">
        <title>Kinase suppressor of Ras forms a multiprotein signaling complex and modulates MEK localization.</title>
        <authorList>
            <person name="Stewart S."/>
            <person name="Sundaram M."/>
            <person name="Zhang Y."/>
            <person name="Lee J."/>
            <person name="Han M."/>
            <person name="Guan K.L."/>
        </authorList>
    </citation>
    <scope>INTERACTION WITH KSR1</scope>
</reference>
<reference key="10">
    <citation type="journal article" date="2000" name="Biochemistry">
        <title>p50(cdc37) is a nonexclusive Hsp90 cohort which participates intimately in Hsp90-mediated folding of immature kinase molecules.</title>
        <authorList>
            <person name="Hartson S.D."/>
            <person name="Irwin A.D."/>
            <person name="Shao J."/>
            <person name="Scroggins B.T."/>
            <person name="Volk L."/>
            <person name="Huang W."/>
            <person name="Matts R.L."/>
        </authorList>
    </citation>
    <scope>CHARACTERIZATION</scope>
</reference>
<reference key="11">
    <citation type="journal article" date="2001" name="J. Biol. Chem.">
        <title>Hsp90 regulates p50(cdc37) function during the biogenesis of the active conformation of the heme-regulated eIF2 alpha kinase.</title>
        <authorList>
            <person name="Shao J."/>
            <person name="Grammatikakis N."/>
            <person name="Scroggins B.T."/>
            <person name="Uma S."/>
            <person name="Huang W."/>
            <person name="Chen J.-J."/>
            <person name="Hartson S.D."/>
            <person name="Matts R.L."/>
        </authorList>
    </citation>
    <scope>INTERACTION WITH EIF2AK1</scope>
</reference>
<reference key="12">
    <citation type="journal article" date="2001" name="J. Biol. Chem.">
        <title>Functional interaction of human Cdc37 with the androgen receptor but not with the glucocorticoid receptor.</title>
        <authorList>
            <person name="Rao J."/>
            <person name="Lee P."/>
            <person name="Benzeno S."/>
            <person name="Cardozo C."/>
            <person name="Albertus J."/>
            <person name="Robins D.M."/>
            <person name="Caplan A.J."/>
        </authorList>
    </citation>
    <scope>INTERACTION WITH AR</scope>
</reference>
<reference key="13">
    <citation type="journal article" date="2005" name="Nat. Biotechnol.">
        <title>Immunoaffinity profiling of tyrosine phosphorylation in cancer cells.</title>
        <authorList>
            <person name="Rush J."/>
            <person name="Moritz A."/>
            <person name="Lee K.A."/>
            <person name="Guo A."/>
            <person name="Goss V.L."/>
            <person name="Spek E.J."/>
            <person name="Zhang H."/>
            <person name="Zha X.-M."/>
            <person name="Polakiewicz R.D."/>
            <person name="Comb M.J."/>
        </authorList>
    </citation>
    <scope>IDENTIFICATION BY MASS SPECTROMETRY [LARGE SCALE ANALYSIS]</scope>
</reference>
<reference key="14">
    <citation type="journal article" date="2007" name="Nucleic Acids Res.">
        <title>Ubc9 fusion-directed SUMOylation identifies constitutive and inducible SUMOylation.</title>
        <authorList>
            <person name="Jakobs A."/>
            <person name="Himstedt F."/>
            <person name="Funk M."/>
            <person name="Korn B."/>
            <person name="Gaestel M."/>
            <person name="Niedenthal R."/>
        </authorList>
    </citation>
    <scope>SUMOYLATION</scope>
</reference>
<reference key="15">
    <citation type="journal article" date="2008" name="Proc. Natl. Acad. Sci. U.S.A.">
        <title>A quantitative atlas of mitotic phosphorylation.</title>
        <authorList>
            <person name="Dephoure N."/>
            <person name="Zhou C."/>
            <person name="Villen J."/>
            <person name="Beausoleil S.A."/>
            <person name="Bakalarski C.E."/>
            <person name="Elledge S.J."/>
            <person name="Gygi S.P."/>
        </authorList>
    </citation>
    <scope>PHOSPHORYLATION [LARGE SCALE ANALYSIS] AT SER-377</scope>
    <scope>IDENTIFICATION BY MASS SPECTROMETRY [LARGE SCALE ANALYSIS]</scope>
    <source>
        <tissue>Cervix carcinoma</tissue>
    </source>
</reference>
<reference key="16">
    <citation type="journal article" date="2009" name="Anal. Chem.">
        <title>Lys-N and trypsin cover complementary parts of the phosphoproteome in a refined SCX-based approach.</title>
        <authorList>
            <person name="Gauci S."/>
            <person name="Helbig A.O."/>
            <person name="Slijper M."/>
            <person name="Krijgsveld J."/>
            <person name="Heck A.J."/>
            <person name="Mohammed S."/>
        </authorList>
    </citation>
    <scope>ACETYLATION [LARGE SCALE ANALYSIS] AT MET-1 AND VAL-2</scope>
    <scope>CLEAVAGE OF INITIATOR METHIONINE [LARGE SCALE ANALYSIS]</scope>
    <scope>IDENTIFICATION BY MASS SPECTROMETRY [LARGE SCALE ANALYSIS]</scope>
</reference>
<reference key="17">
    <citation type="journal article" date="2009" name="Science">
        <title>Lysine acetylation targets protein complexes and co-regulates major cellular functions.</title>
        <authorList>
            <person name="Choudhary C."/>
            <person name="Kumar C."/>
            <person name="Gnad F."/>
            <person name="Nielsen M.L."/>
            <person name="Rehman M."/>
            <person name="Walther T.C."/>
            <person name="Olsen J.V."/>
            <person name="Mann M."/>
        </authorList>
    </citation>
    <scope>ACETYLATION [LARGE SCALE ANALYSIS] AT LYS-78 AND LYS-154</scope>
    <scope>IDENTIFICATION BY MASS SPECTROMETRY [LARGE SCALE ANALYSIS]</scope>
</reference>
<reference key="18">
    <citation type="journal article" date="2010" name="Sci. Signal.">
        <title>Quantitative phosphoproteomics reveals widespread full phosphorylation site occupancy during mitosis.</title>
        <authorList>
            <person name="Olsen J.V."/>
            <person name="Vermeulen M."/>
            <person name="Santamaria A."/>
            <person name="Kumar C."/>
            <person name="Miller M.L."/>
            <person name="Jensen L.J."/>
            <person name="Gnad F."/>
            <person name="Cox J."/>
            <person name="Jensen T.S."/>
            <person name="Nigg E.A."/>
            <person name="Brunak S."/>
            <person name="Mann M."/>
        </authorList>
    </citation>
    <scope>ACETYLATION [LARGE SCALE ANALYSIS] AT VAL-2</scope>
    <scope>PHOSPHORYLATION [LARGE SCALE ANALYSIS] AT SER-13</scope>
    <scope>CLEAVAGE OF INITIATOR METHIONINE [LARGE SCALE ANALYSIS]</scope>
    <scope>IDENTIFICATION BY MASS SPECTROMETRY [LARGE SCALE ANALYSIS]</scope>
    <source>
        <tissue>Cervix carcinoma</tissue>
    </source>
</reference>
<reference key="19">
    <citation type="journal article" date="2011" name="BMC Syst. Biol.">
        <title>Initial characterization of the human central proteome.</title>
        <authorList>
            <person name="Burkard T.R."/>
            <person name="Planyavsky M."/>
            <person name="Kaupe I."/>
            <person name="Breitwieser F.P."/>
            <person name="Buerckstuemmer T."/>
            <person name="Bennett K.L."/>
            <person name="Superti-Furga G."/>
            <person name="Colinge J."/>
        </authorList>
    </citation>
    <scope>IDENTIFICATION BY MASS SPECTROMETRY [LARGE SCALE ANALYSIS]</scope>
</reference>
<reference key="20">
    <citation type="journal article" date="2011" name="Sci. Signal.">
        <title>System-wide temporal characterization of the proteome and phosphoproteome of human embryonic stem cell differentiation.</title>
        <authorList>
            <person name="Rigbolt K.T."/>
            <person name="Prokhorova T.A."/>
            <person name="Akimov V."/>
            <person name="Henningsen J."/>
            <person name="Johansen P.T."/>
            <person name="Kratchmarova I."/>
            <person name="Kassem M."/>
            <person name="Mann M."/>
            <person name="Olsen J.V."/>
            <person name="Blagoev B."/>
        </authorList>
    </citation>
    <scope>ACETYLATION [LARGE SCALE ANALYSIS] AT VAL-2</scope>
    <scope>PHOSPHORYLATION [LARGE SCALE ANALYSIS] AT SER-13</scope>
    <scope>CLEAVAGE OF INITIATOR METHIONINE [LARGE SCALE ANALYSIS]</scope>
    <scope>IDENTIFICATION BY MASS SPECTROMETRY [LARGE SCALE ANALYSIS]</scope>
</reference>
<reference key="21">
    <citation type="journal article" date="2012" name="Proc. Natl. Acad. Sci. U.S.A.">
        <title>N-terminal acetylome analyses and functional insights of the N-terminal acetyltransferase NatB.</title>
        <authorList>
            <person name="Van Damme P."/>
            <person name="Lasa M."/>
            <person name="Polevoda B."/>
            <person name="Gazquez C."/>
            <person name="Elosegui-Artola A."/>
            <person name="Kim D.S."/>
            <person name="De Juan-Pardo E."/>
            <person name="Demeyer K."/>
            <person name="Hole K."/>
            <person name="Larrea E."/>
            <person name="Timmerman E."/>
            <person name="Prieto J."/>
            <person name="Arnesen T."/>
            <person name="Sherman F."/>
            <person name="Gevaert K."/>
            <person name="Aldabe R."/>
        </authorList>
    </citation>
    <scope>IDENTIFICATION BY MASS SPECTROMETRY [LARGE SCALE ANALYSIS]</scope>
</reference>
<reference key="22">
    <citation type="journal article" date="2013" name="J. Biol. Chem.">
        <title>Cdc37 (cell division cycle 37) restricts Hsp90 (heat shock protein 90) motility by interaction with N-terminal and middle domain binding sites.</title>
        <authorList>
            <person name="Eckl J.M."/>
            <person name="Rutz D.A."/>
            <person name="Haslbeck V."/>
            <person name="Zierer B.K."/>
            <person name="Reinstein J."/>
            <person name="Richter K."/>
        </authorList>
    </citation>
    <scope>FUNCTION</scope>
    <scope>INTERACTION WITH HSP90AA1</scope>
</reference>
<reference key="23">
    <citation type="journal article" date="2013" name="J. Proteome Res.">
        <title>Toward a comprehensive characterization of a human cancer cell phosphoproteome.</title>
        <authorList>
            <person name="Zhou H."/>
            <person name="Di Palma S."/>
            <person name="Preisinger C."/>
            <person name="Peng M."/>
            <person name="Polat A.N."/>
            <person name="Heck A.J."/>
            <person name="Mohammed S."/>
        </authorList>
    </citation>
    <scope>PHOSPHORYLATION [LARGE SCALE ANALYSIS] AT THR-118 AND SER-120</scope>
    <scope>IDENTIFICATION BY MASS SPECTROMETRY [LARGE SCALE ANALYSIS]</scope>
    <source>
        <tissue>Cervix carcinoma</tissue>
        <tissue>Erythroleukemia</tissue>
    </source>
</reference>
<reference key="24">
    <citation type="journal article" date="2014" name="J. Proteomics">
        <title>An enzyme assisted RP-RPLC approach for in-depth analysis of human liver phosphoproteome.</title>
        <authorList>
            <person name="Bian Y."/>
            <person name="Song C."/>
            <person name="Cheng K."/>
            <person name="Dong M."/>
            <person name="Wang F."/>
            <person name="Huang J."/>
            <person name="Sun D."/>
            <person name="Wang L."/>
            <person name="Ye M."/>
            <person name="Zou H."/>
        </authorList>
    </citation>
    <scope>IDENTIFICATION BY MASS SPECTROMETRY [LARGE SCALE ANALYSIS]</scope>
    <source>
        <tissue>Liver</tissue>
    </source>
</reference>
<reference key="25">
    <citation type="journal article" date="2016" name="Nat. Commun.">
        <title>The FNIP co-chaperones decelerate the Hsp90 chaperone cycle and enhance drug binding.</title>
        <authorList>
            <person name="Woodford M.R."/>
            <person name="Dunn D.M."/>
            <person name="Blanden A.R."/>
            <person name="Capriotti D."/>
            <person name="Loiselle D."/>
            <person name="Prodromou C."/>
            <person name="Panaretou B."/>
            <person name="Hughes P.F."/>
            <person name="Smith A."/>
            <person name="Ackerman W."/>
            <person name="Haystead T.A."/>
            <person name="Loh S.N."/>
            <person name="Bourboulia D."/>
            <person name="Schmidt L.S."/>
            <person name="Marston Linehan W."/>
            <person name="Bratslavsky G."/>
            <person name="Mollapour M."/>
        </authorList>
    </citation>
    <scope>INTERACTION WITH HSP90AA1; FLCN; FNIP1 AND FNIP2</scope>
</reference>
<reference key="26">
    <citation type="journal article" date="2017" name="EMBO J.">
        <title>Tumor suppressor Tsc1 is a new Hsp90 co-chaperone that facilitates folding of kinase and non-kinase clients.</title>
        <authorList>
            <person name="Woodford M.R."/>
            <person name="Sager R.A."/>
            <person name="Marris E."/>
            <person name="Dunn D.M."/>
            <person name="Blanden A.R."/>
            <person name="Murphy R.L."/>
            <person name="Rensing N."/>
            <person name="Shapiro O."/>
            <person name="Panaretou B."/>
            <person name="Prodromou C."/>
            <person name="Loh S.N."/>
            <person name="Gutmann D.H."/>
            <person name="Bourboulia D."/>
            <person name="Bratslavsky G."/>
            <person name="Wong M."/>
            <person name="Mollapour M."/>
        </authorList>
    </citation>
    <scope>IDENTIFICATION IN A COMPLEX WITH HSP90; HSP70; STIP1; PPP5C; PTGES3; TSC1; TSC2; AKT; CDK4; RAF1 AND NR3C1</scope>
</reference>